<dbReference type="EMBL" id="X53288">
    <property type="protein sequence ID" value="CAA37382.1"/>
    <property type="molecule type" value="Genomic_DNA"/>
</dbReference>
<dbReference type="EMBL" id="M33924">
    <property type="protein sequence ID" value="AAA34989.1"/>
    <property type="molecule type" value="Genomic_DNA"/>
</dbReference>
<dbReference type="EMBL" id="U25841">
    <property type="protein sequence ID" value="AAB64616.1"/>
    <property type="molecule type" value="Genomic_DNA"/>
</dbReference>
<dbReference type="EMBL" id="BK006949">
    <property type="protein sequence ID" value="DAA11603.1"/>
    <property type="molecule type" value="Genomic_DNA"/>
</dbReference>
<dbReference type="PIR" id="S13307">
    <property type="entry name" value="RNBYR6"/>
</dbReference>
<dbReference type="RefSeq" id="NP_015513.1">
    <property type="nucleotide sequence ID" value="NM_001184284.1"/>
</dbReference>
<dbReference type="PDB" id="1I3Q">
    <property type="method" value="X-ray"/>
    <property type="resolution" value="3.10 A"/>
    <property type="chains" value="F=1-155"/>
</dbReference>
<dbReference type="PDB" id="1I50">
    <property type="method" value="X-ray"/>
    <property type="resolution" value="2.80 A"/>
    <property type="chains" value="F=1-155"/>
</dbReference>
<dbReference type="PDB" id="1I6H">
    <property type="method" value="X-ray"/>
    <property type="resolution" value="3.30 A"/>
    <property type="chains" value="F=1-155"/>
</dbReference>
<dbReference type="PDB" id="1K83">
    <property type="method" value="X-ray"/>
    <property type="resolution" value="2.80 A"/>
    <property type="chains" value="F=1-155"/>
</dbReference>
<dbReference type="PDB" id="1NIK">
    <property type="method" value="X-ray"/>
    <property type="resolution" value="4.10 A"/>
    <property type="chains" value="F=1-155"/>
</dbReference>
<dbReference type="PDB" id="1NT9">
    <property type="method" value="X-ray"/>
    <property type="resolution" value="4.20 A"/>
    <property type="chains" value="F=1-155"/>
</dbReference>
<dbReference type="PDB" id="1PQV">
    <property type="method" value="X-ray"/>
    <property type="resolution" value="3.80 A"/>
    <property type="chains" value="F=1-155"/>
</dbReference>
<dbReference type="PDB" id="1R5U">
    <property type="method" value="X-ray"/>
    <property type="resolution" value="4.50 A"/>
    <property type="chains" value="F=1-155"/>
</dbReference>
<dbReference type="PDB" id="1R9S">
    <property type="method" value="X-ray"/>
    <property type="resolution" value="4.25 A"/>
    <property type="chains" value="F=1-155"/>
</dbReference>
<dbReference type="PDB" id="1R9T">
    <property type="method" value="X-ray"/>
    <property type="resolution" value="3.50 A"/>
    <property type="chains" value="F=1-155"/>
</dbReference>
<dbReference type="PDB" id="1SFO">
    <property type="method" value="X-ray"/>
    <property type="resolution" value="3.61 A"/>
    <property type="chains" value="F=1-155"/>
</dbReference>
<dbReference type="PDB" id="1TWA">
    <property type="method" value="X-ray"/>
    <property type="resolution" value="3.20 A"/>
    <property type="chains" value="F=1-155"/>
</dbReference>
<dbReference type="PDB" id="1TWC">
    <property type="method" value="X-ray"/>
    <property type="resolution" value="3.00 A"/>
    <property type="chains" value="F=1-155"/>
</dbReference>
<dbReference type="PDB" id="1TWF">
    <property type="method" value="X-ray"/>
    <property type="resolution" value="2.30 A"/>
    <property type="chains" value="F=1-155"/>
</dbReference>
<dbReference type="PDB" id="1TWG">
    <property type="method" value="X-ray"/>
    <property type="resolution" value="3.30 A"/>
    <property type="chains" value="F=1-155"/>
</dbReference>
<dbReference type="PDB" id="1TWH">
    <property type="method" value="X-ray"/>
    <property type="resolution" value="3.40 A"/>
    <property type="chains" value="F=1-155"/>
</dbReference>
<dbReference type="PDB" id="1WCM">
    <property type="method" value="X-ray"/>
    <property type="resolution" value="3.80 A"/>
    <property type="chains" value="F=1-155"/>
</dbReference>
<dbReference type="PDB" id="1Y1V">
    <property type="method" value="X-ray"/>
    <property type="resolution" value="3.80 A"/>
    <property type="chains" value="F=1-155"/>
</dbReference>
<dbReference type="PDB" id="1Y1W">
    <property type="method" value="X-ray"/>
    <property type="resolution" value="4.00 A"/>
    <property type="chains" value="F=1-155"/>
</dbReference>
<dbReference type="PDB" id="1Y1Y">
    <property type="method" value="X-ray"/>
    <property type="resolution" value="4.00 A"/>
    <property type="chains" value="F=1-155"/>
</dbReference>
<dbReference type="PDB" id="1Y77">
    <property type="method" value="X-ray"/>
    <property type="resolution" value="4.50 A"/>
    <property type="chains" value="F=1-155"/>
</dbReference>
<dbReference type="PDB" id="2B63">
    <property type="method" value="X-ray"/>
    <property type="resolution" value="3.80 A"/>
    <property type="chains" value="F=1-155"/>
</dbReference>
<dbReference type="PDB" id="2B8K">
    <property type="method" value="X-ray"/>
    <property type="resolution" value="4.15 A"/>
    <property type="chains" value="F=1-155"/>
</dbReference>
<dbReference type="PDB" id="2E2H">
    <property type="method" value="X-ray"/>
    <property type="resolution" value="3.95 A"/>
    <property type="chains" value="F=1-155"/>
</dbReference>
<dbReference type="PDB" id="2E2I">
    <property type="method" value="X-ray"/>
    <property type="resolution" value="3.41 A"/>
    <property type="chains" value="F=1-155"/>
</dbReference>
<dbReference type="PDB" id="2E2J">
    <property type="method" value="X-ray"/>
    <property type="resolution" value="3.50 A"/>
    <property type="chains" value="F=1-155"/>
</dbReference>
<dbReference type="PDB" id="2JA5">
    <property type="method" value="X-ray"/>
    <property type="resolution" value="3.80 A"/>
    <property type="chains" value="F=1-155"/>
</dbReference>
<dbReference type="PDB" id="2JA6">
    <property type="method" value="X-ray"/>
    <property type="resolution" value="4.00 A"/>
    <property type="chains" value="F=1-155"/>
</dbReference>
<dbReference type="PDB" id="2JA7">
    <property type="method" value="X-ray"/>
    <property type="resolution" value="3.80 A"/>
    <property type="chains" value="F/R=1-155"/>
</dbReference>
<dbReference type="PDB" id="2JA8">
    <property type="method" value="X-ray"/>
    <property type="resolution" value="3.80 A"/>
    <property type="chains" value="F=1-155"/>
</dbReference>
<dbReference type="PDB" id="2NVQ">
    <property type="method" value="X-ray"/>
    <property type="resolution" value="2.90 A"/>
    <property type="chains" value="F=1-155"/>
</dbReference>
<dbReference type="PDB" id="2NVT">
    <property type="method" value="X-ray"/>
    <property type="resolution" value="3.36 A"/>
    <property type="chains" value="F=1-155"/>
</dbReference>
<dbReference type="PDB" id="2NVX">
    <property type="method" value="X-ray"/>
    <property type="resolution" value="3.60 A"/>
    <property type="chains" value="F=1-155"/>
</dbReference>
<dbReference type="PDB" id="2NVY">
    <property type="method" value="X-ray"/>
    <property type="resolution" value="3.40 A"/>
    <property type="chains" value="F=1-155"/>
</dbReference>
<dbReference type="PDB" id="2NVZ">
    <property type="method" value="X-ray"/>
    <property type="resolution" value="4.30 A"/>
    <property type="chains" value="F=1-155"/>
</dbReference>
<dbReference type="PDB" id="2R7Z">
    <property type="method" value="X-ray"/>
    <property type="resolution" value="3.80 A"/>
    <property type="chains" value="F=1-155"/>
</dbReference>
<dbReference type="PDB" id="2R92">
    <property type="method" value="X-ray"/>
    <property type="resolution" value="3.80 A"/>
    <property type="chains" value="F=1-155"/>
</dbReference>
<dbReference type="PDB" id="2R93">
    <property type="method" value="X-ray"/>
    <property type="resolution" value="4.00 A"/>
    <property type="chains" value="F=1-155"/>
</dbReference>
<dbReference type="PDB" id="2VUM">
    <property type="method" value="X-ray"/>
    <property type="resolution" value="3.40 A"/>
    <property type="chains" value="F=1-155"/>
</dbReference>
<dbReference type="PDB" id="2YU9">
    <property type="method" value="X-ray"/>
    <property type="resolution" value="3.40 A"/>
    <property type="chains" value="F=1-155"/>
</dbReference>
<dbReference type="PDB" id="3CQZ">
    <property type="method" value="X-ray"/>
    <property type="resolution" value="2.80 A"/>
    <property type="chains" value="F=1-155"/>
</dbReference>
<dbReference type="PDB" id="3FKI">
    <property type="method" value="X-ray"/>
    <property type="resolution" value="3.88 A"/>
    <property type="chains" value="F=1-155"/>
</dbReference>
<dbReference type="PDB" id="3GTG">
    <property type="method" value="X-ray"/>
    <property type="resolution" value="3.78 A"/>
    <property type="chains" value="F=1-155"/>
</dbReference>
<dbReference type="PDB" id="3GTJ">
    <property type="method" value="X-ray"/>
    <property type="resolution" value="3.42 A"/>
    <property type="chains" value="F=1-155"/>
</dbReference>
<dbReference type="PDB" id="3GTK">
    <property type="method" value="X-ray"/>
    <property type="resolution" value="3.80 A"/>
    <property type="chains" value="F=1-155"/>
</dbReference>
<dbReference type="PDB" id="3GTL">
    <property type="method" value="X-ray"/>
    <property type="resolution" value="3.38 A"/>
    <property type="chains" value="F=1-155"/>
</dbReference>
<dbReference type="PDB" id="3GTM">
    <property type="method" value="X-ray"/>
    <property type="resolution" value="3.80 A"/>
    <property type="chains" value="F=1-155"/>
</dbReference>
<dbReference type="PDB" id="3GTO">
    <property type="method" value="X-ray"/>
    <property type="resolution" value="4.00 A"/>
    <property type="chains" value="F=1-155"/>
</dbReference>
<dbReference type="PDB" id="3GTP">
    <property type="method" value="X-ray"/>
    <property type="resolution" value="3.90 A"/>
    <property type="chains" value="F=1-155"/>
</dbReference>
<dbReference type="PDB" id="3GTQ">
    <property type="method" value="X-ray"/>
    <property type="resolution" value="3.80 A"/>
    <property type="chains" value="F=1-155"/>
</dbReference>
<dbReference type="PDB" id="3H3V">
    <property type="method" value="X-ray"/>
    <property type="resolution" value="4.00 A"/>
    <property type="chains" value="G=1-155"/>
</dbReference>
<dbReference type="PDB" id="3HOU">
    <property type="method" value="X-ray"/>
    <property type="resolution" value="3.20 A"/>
    <property type="chains" value="F/R=1-155"/>
</dbReference>
<dbReference type="PDB" id="3HOV">
    <property type="method" value="X-ray"/>
    <property type="resolution" value="3.50 A"/>
    <property type="chains" value="F=1-155"/>
</dbReference>
<dbReference type="PDB" id="3HOW">
    <property type="method" value="X-ray"/>
    <property type="resolution" value="3.60 A"/>
    <property type="chains" value="F=1-155"/>
</dbReference>
<dbReference type="PDB" id="3HOX">
    <property type="method" value="X-ray"/>
    <property type="resolution" value="3.65 A"/>
    <property type="chains" value="F=1-155"/>
</dbReference>
<dbReference type="PDB" id="3HOY">
    <property type="method" value="X-ray"/>
    <property type="resolution" value="3.40 A"/>
    <property type="chains" value="F=1-155"/>
</dbReference>
<dbReference type="PDB" id="3HOZ">
    <property type="method" value="X-ray"/>
    <property type="resolution" value="3.65 A"/>
    <property type="chains" value="F=1-155"/>
</dbReference>
<dbReference type="PDB" id="3I4M">
    <property type="method" value="X-ray"/>
    <property type="resolution" value="3.70 A"/>
    <property type="chains" value="F=1-155"/>
</dbReference>
<dbReference type="PDB" id="3I4N">
    <property type="method" value="X-ray"/>
    <property type="resolution" value="3.90 A"/>
    <property type="chains" value="F=1-155"/>
</dbReference>
<dbReference type="PDB" id="3J0K">
    <property type="method" value="EM"/>
    <property type="resolution" value="36.00 A"/>
    <property type="chains" value="F=72-155"/>
</dbReference>
<dbReference type="PDB" id="3J1N">
    <property type="method" value="EM"/>
    <property type="resolution" value="16.00 A"/>
    <property type="chains" value="F=72-155"/>
</dbReference>
<dbReference type="PDB" id="3K1F">
    <property type="method" value="X-ray"/>
    <property type="resolution" value="4.30 A"/>
    <property type="chains" value="F=1-155"/>
</dbReference>
<dbReference type="PDB" id="3K7A">
    <property type="method" value="X-ray"/>
    <property type="resolution" value="3.80 A"/>
    <property type="chains" value="F=1-155"/>
</dbReference>
<dbReference type="PDB" id="3M3Y">
    <property type="method" value="X-ray"/>
    <property type="resolution" value="3.18 A"/>
    <property type="chains" value="F=1-155"/>
</dbReference>
<dbReference type="PDB" id="3M4O">
    <property type="method" value="X-ray"/>
    <property type="resolution" value="3.57 A"/>
    <property type="chains" value="F=1-155"/>
</dbReference>
<dbReference type="PDB" id="3PO2">
    <property type="method" value="X-ray"/>
    <property type="resolution" value="3.30 A"/>
    <property type="chains" value="F=1-155"/>
</dbReference>
<dbReference type="PDB" id="3PO3">
    <property type="method" value="X-ray"/>
    <property type="resolution" value="3.30 A"/>
    <property type="chains" value="F=1-155"/>
</dbReference>
<dbReference type="PDB" id="3QT1">
    <property type="method" value="X-ray"/>
    <property type="resolution" value="4.30 A"/>
    <property type="chains" value="F=1-155"/>
</dbReference>
<dbReference type="PDB" id="3RZD">
    <property type="method" value="X-ray"/>
    <property type="resolution" value="3.30 A"/>
    <property type="chains" value="F=1-155"/>
</dbReference>
<dbReference type="PDB" id="3RZO">
    <property type="method" value="X-ray"/>
    <property type="resolution" value="3.00 A"/>
    <property type="chains" value="F=1-155"/>
</dbReference>
<dbReference type="PDB" id="3S14">
    <property type="method" value="X-ray"/>
    <property type="resolution" value="2.85 A"/>
    <property type="chains" value="F=1-155"/>
</dbReference>
<dbReference type="PDB" id="3S15">
    <property type="method" value="X-ray"/>
    <property type="resolution" value="3.30 A"/>
    <property type="chains" value="F=1-155"/>
</dbReference>
<dbReference type="PDB" id="3S16">
    <property type="method" value="X-ray"/>
    <property type="resolution" value="3.24 A"/>
    <property type="chains" value="F=1-155"/>
</dbReference>
<dbReference type="PDB" id="3S17">
    <property type="method" value="X-ray"/>
    <property type="resolution" value="3.20 A"/>
    <property type="chains" value="F=1-155"/>
</dbReference>
<dbReference type="PDB" id="3S1M">
    <property type="method" value="X-ray"/>
    <property type="resolution" value="3.13 A"/>
    <property type="chains" value="F=1-155"/>
</dbReference>
<dbReference type="PDB" id="3S1N">
    <property type="method" value="X-ray"/>
    <property type="resolution" value="3.10 A"/>
    <property type="chains" value="F=1-155"/>
</dbReference>
<dbReference type="PDB" id="3S1Q">
    <property type="method" value="X-ray"/>
    <property type="resolution" value="3.30 A"/>
    <property type="chains" value="F=1-155"/>
</dbReference>
<dbReference type="PDB" id="3S1R">
    <property type="method" value="X-ray"/>
    <property type="resolution" value="3.20 A"/>
    <property type="chains" value="F=1-155"/>
</dbReference>
<dbReference type="PDB" id="3S2D">
    <property type="method" value="X-ray"/>
    <property type="resolution" value="3.20 A"/>
    <property type="chains" value="F=1-155"/>
</dbReference>
<dbReference type="PDB" id="3S2H">
    <property type="method" value="X-ray"/>
    <property type="resolution" value="3.30 A"/>
    <property type="chains" value="F=1-155"/>
</dbReference>
<dbReference type="PDB" id="4A3B">
    <property type="method" value="X-ray"/>
    <property type="resolution" value="3.50 A"/>
    <property type="chains" value="F=1-155"/>
</dbReference>
<dbReference type="PDB" id="4A3C">
    <property type="method" value="X-ray"/>
    <property type="resolution" value="3.50 A"/>
    <property type="chains" value="F=1-155"/>
</dbReference>
<dbReference type="PDB" id="4A3D">
    <property type="method" value="X-ray"/>
    <property type="resolution" value="3.40 A"/>
    <property type="chains" value="F=1-155"/>
</dbReference>
<dbReference type="PDB" id="4A3E">
    <property type="method" value="X-ray"/>
    <property type="resolution" value="3.40 A"/>
    <property type="chains" value="F=1-155"/>
</dbReference>
<dbReference type="PDB" id="4A3F">
    <property type="method" value="X-ray"/>
    <property type="resolution" value="3.50 A"/>
    <property type="chains" value="F=1-155"/>
</dbReference>
<dbReference type="PDB" id="4A3G">
    <property type="method" value="X-ray"/>
    <property type="resolution" value="3.50 A"/>
    <property type="chains" value="F=1-155"/>
</dbReference>
<dbReference type="PDB" id="4A3I">
    <property type="method" value="X-ray"/>
    <property type="resolution" value="3.80 A"/>
    <property type="chains" value="F=1-155"/>
</dbReference>
<dbReference type="PDB" id="4A3J">
    <property type="method" value="X-ray"/>
    <property type="resolution" value="3.70 A"/>
    <property type="chains" value="F=1-155"/>
</dbReference>
<dbReference type="PDB" id="4A3K">
    <property type="method" value="X-ray"/>
    <property type="resolution" value="3.50 A"/>
    <property type="chains" value="F=1-155"/>
</dbReference>
<dbReference type="PDB" id="4A3L">
    <property type="method" value="X-ray"/>
    <property type="resolution" value="3.50 A"/>
    <property type="chains" value="F=1-155"/>
</dbReference>
<dbReference type="PDB" id="4A3M">
    <property type="method" value="X-ray"/>
    <property type="resolution" value="3.90 A"/>
    <property type="chains" value="F=1-155"/>
</dbReference>
<dbReference type="PDB" id="4A93">
    <property type="method" value="X-ray"/>
    <property type="resolution" value="3.40 A"/>
    <property type="chains" value="F=1-155"/>
</dbReference>
<dbReference type="PDB" id="4BBR">
    <property type="method" value="X-ray"/>
    <property type="resolution" value="3.40 A"/>
    <property type="chains" value="F=1-155"/>
</dbReference>
<dbReference type="PDB" id="4BBS">
    <property type="method" value="X-ray"/>
    <property type="resolution" value="3.60 A"/>
    <property type="chains" value="F=1-155"/>
</dbReference>
<dbReference type="PDB" id="4BXX">
    <property type="method" value="X-ray"/>
    <property type="resolution" value="3.28 A"/>
    <property type="chains" value="F=1-155"/>
</dbReference>
<dbReference type="PDB" id="4BXZ">
    <property type="method" value="X-ray"/>
    <property type="resolution" value="4.80 A"/>
    <property type="chains" value="F=1-155"/>
</dbReference>
<dbReference type="PDB" id="4BY1">
    <property type="method" value="X-ray"/>
    <property type="resolution" value="3.60 A"/>
    <property type="chains" value="F=1-155"/>
</dbReference>
<dbReference type="PDB" id="4BY7">
    <property type="method" value="X-ray"/>
    <property type="resolution" value="3.15 A"/>
    <property type="chains" value="F=1-155"/>
</dbReference>
<dbReference type="PDB" id="4C2M">
    <property type="method" value="X-ray"/>
    <property type="resolution" value="2.80 A"/>
    <property type="chains" value="F/U=1-155"/>
</dbReference>
<dbReference type="PDB" id="4C3H">
    <property type="method" value="X-ray"/>
    <property type="resolution" value="3.27 A"/>
    <property type="chains" value="F=1-155"/>
</dbReference>
<dbReference type="PDB" id="4C3I">
    <property type="method" value="X-ray"/>
    <property type="resolution" value="3.00 A"/>
    <property type="chains" value="F=1-155"/>
</dbReference>
<dbReference type="PDB" id="4C3J">
    <property type="method" value="X-ray"/>
    <property type="resolution" value="3.35 A"/>
    <property type="chains" value="F=1-155"/>
</dbReference>
<dbReference type="PDB" id="4V1M">
    <property type="method" value="EM"/>
    <property type="resolution" value="6.60 A"/>
    <property type="chains" value="F=1-155"/>
</dbReference>
<dbReference type="PDB" id="4V1N">
    <property type="method" value="EM"/>
    <property type="resolution" value="7.80 A"/>
    <property type="chains" value="F=1-155"/>
</dbReference>
<dbReference type="PDB" id="4V1O">
    <property type="method" value="EM"/>
    <property type="resolution" value="9.70 A"/>
    <property type="chains" value="F=1-155"/>
</dbReference>
<dbReference type="PDB" id="4X67">
    <property type="method" value="X-ray"/>
    <property type="resolution" value="4.10 A"/>
    <property type="chains" value="F=1-155"/>
</dbReference>
<dbReference type="PDB" id="4X6A">
    <property type="method" value="X-ray"/>
    <property type="resolution" value="3.96 A"/>
    <property type="chains" value="F=1-155"/>
</dbReference>
<dbReference type="PDB" id="4Y52">
    <property type="method" value="X-ray"/>
    <property type="resolution" value="3.50 A"/>
    <property type="chains" value="F=1-155"/>
</dbReference>
<dbReference type="PDB" id="4Y7N">
    <property type="method" value="X-ray"/>
    <property type="resolution" value="3.30 A"/>
    <property type="chains" value="F=1-155"/>
</dbReference>
<dbReference type="PDB" id="4YM7">
    <property type="method" value="X-ray"/>
    <property type="resolution" value="5.50 A"/>
    <property type="chains" value="AF/BF/CF/DF/EF/FF=1-155"/>
</dbReference>
<dbReference type="PDB" id="5C3E">
    <property type="method" value="X-ray"/>
    <property type="resolution" value="3.70 A"/>
    <property type="chains" value="F=1-155"/>
</dbReference>
<dbReference type="PDB" id="5C44">
    <property type="method" value="X-ray"/>
    <property type="resolution" value="3.95 A"/>
    <property type="chains" value="F=1-155"/>
</dbReference>
<dbReference type="PDB" id="5C4A">
    <property type="method" value="X-ray"/>
    <property type="resolution" value="4.20 A"/>
    <property type="chains" value="F=1-155"/>
</dbReference>
<dbReference type="PDB" id="5C4J">
    <property type="method" value="X-ray"/>
    <property type="resolution" value="4.00 A"/>
    <property type="chains" value="F=1-155"/>
</dbReference>
<dbReference type="PDB" id="5C4X">
    <property type="method" value="X-ray"/>
    <property type="resolution" value="4.00 A"/>
    <property type="chains" value="F=1-155"/>
</dbReference>
<dbReference type="PDB" id="5FJ8">
    <property type="method" value="EM"/>
    <property type="resolution" value="3.90 A"/>
    <property type="chains" value="F=1-155"/>
</dbReference>
<dbReference type="PDB" id="5FJ9">
    <property type="method" value="EM"/>
    <property type="resolution" value="4.60 A"/>
    <property type="chains" value="F=1-155"/>
</dbReference>
<dbReference type="PDB" id="5FJA">
    <property type="method" value="EM"/>
    <property type="resolution" value="4.65 A"/>
    <property type="chains" value="F=1-155"/>
</dbReference>
<dbReference type="PDB" id="5FMF">
    <property type="method" value="EM"/>
    <property type="resolution" value="6.00 A"/>
    <property type="chains" value="F=72-155"/>
</dbReference>
<dbReference type="PDB" id="5FYW">
    <property type="method" value="EM"/>
    <property type="resolution" value="4.35 A"/>
    <property type="chains" value="F=1-155"/>
</dbReference>
<dbReference type="PDB" id="5FZ5">
    <property type="method" value="EM"/>
    <property type="resolution" value="8.80 A"/>
    <property type="chains" value="F=1-155"/>
</dbReference>
<dbReference type="PDB" id="5G5L">
    <property type="method" value="EM"/>
    <property type="resolution" value="4.80 A"/>
    <property type="chains" value="F=1-155"/>
</dbReference>
<dbReference type="PDB" id="5IP7">
    <property type="method" value="X-ray"/>
    <property type="resolution" value="3.52 A"/>
    <property type="chains" value="F=69-155"/>
</dbReference>
<dbReference type="PDB" id="5IP9">
    <property type="method" value="X-ray"/>
    <property type="resolution" value="3.90 A"/>
    <property type="chains" value="F=69-155"/>
</dbReference>
<dbReference type="PDB" id="5LMX">
    <property type="method" value="EM"/>
    <property type="resolution" value="4.90 A"/>
    <property type="chains" value="F=1-155"/>
</dbReference>
<dbReference type="PDB" id="5M3F">
    <property type="method" value="EM"/>
    <property type="resolution" value="3.80 A"/>
    <property type="chains" value="F=1-155"/>
</dbReference>
<dbReference type="PDB" id="5M3M">
    <property type="method" value="EM"/>
    <property type="resolution" value="4.00 A"/>
    <property type="chains" value="F=1-155"/>
</dbReference>
<dbReference type="PDB" id="5M5W">
    <property type="method" value="EM"/>
    <property type="resolution" value="3.80 A"/>
    <property type="chains" value="F=1-155"/>
</dbReference>
<dbReference type="PDB" id="5M5X">
    <property type="method" value="EM"/>
    <property type="resolution" value="4.00 A"/>
    <property type="chains" value="F=1-155"/>
</dbReference>
<dbReference type="PDB" id="5M5Y">
    <property type="method" value="EM"/>
    <property type="resolution" value="4.00 A"/>
    <property type="chains" value="F=1-155"/>
</dbReference>
<dbReference type="PDB" id="5M64">
    <property type="method" value="EM"/>
    <property type="resolution" value="4.60 A"/>
    <property type="chains" value="F=1-155"/>
</dbReference>
<dbReference type="PDB" id="5N5Y">
    <property type="method" value="EM"/>
    <property type="resolution" value="7.70 A"/>
    <property type="chains" value="F=1-155"/>
</dbReference>
<dbReference type="PDB" id="5N5Z">
    <property type="method" value="EM"/>
    <property type="resolution" value="7.70 A"/>
    <property type="chains" value="F=1-155"/>
</dbReference>
<dbReference type="PDB" id="5N60">
    <property type="method" value="EM"/>
    <property type="resolution" value="7.70 A"/>
    <property type="chains" value="F=1-155"/>
</dbReference>
<dbReference type="PDB" id="5N61">
    <property type="method" value="EM"/>
    <property type="resolution" value="3.40 A"/>
    <property type="chains" value="F=1-155"/>
</dbReference>
<dbReference type="PDB" id="5OA1">
    <property type="method" value="EM"/>
    <property type="resolution" value="4.40 A"/>
    <property type="chains" value="F=1-155"/>
</dbReference>
<dbReference type="PDB" id="5OQJ">
    <property type="method" value="EM"/>
    <property type="resolution" value="4.70 A"/>
    <property type="chains" value="F=1-155"/>
</dbReference>
<dbReference type="PDB" id="5OQM">
    <property type="method" value="EM"/>
    <property type="resolution" value="5.80 A"/>
    <property type="chains" value="F=1-155"/>
</dbReference>
<dbReference type="PDB" id="5OT2">
    <property type="method" value="X-ray"/>
    <property type="resolution" value="3.20 A"/>
    <property type="chains" value="F=1-155"/>
</dbReference>
<dbReference type="PDB" id="5SVA">
    <property type="method" value="EM"/>
    <property type="resolution" value="15.30 A"/>
    <property type="chains" value="F=1-155"/>
</dbReference>
<dbReference type="PDB" id="5U5Q">
    <property type="method" value="X-ray"/>
    <property type="resolution" value="3.80 A"/>
    <property type="chains" value="F=1-155"/>
</dbReference>
<dbReference type="PDB" id="5VVR">
    <property type="method" value="EM"/>
    <property type="resolution" value="5.80 A"/>
    <property type="chains" value="F=1-155"/>
</dbReference>
<dbReference type="PDB" id="5VVS">
    <property type="method" value="EM"/>
    <property type="resolution" value="6.40 A"/>
    <property type="chains" value="F=1-155"/>
</dbReference>
<dbReference type="PDB" id="5W4U">
    <property type="method" value="X-ray"/>
    <property type="resolution" value="3.60 A"/>
    <property type="chains" value="F=1-155"/>
</dbReference>
<dbReference type="PDB" id="5W51">
    <property type="method" value="X-ray"/>
    <property type="resolution" value="3.40 A"/>
    <property type="chains" value="F=1-155"/>
</dbReference>
<dbReference type="PDB" id="5W5Y">
    <property type="method" value="EM"/>
    <property type="resolution" value="3.80 A"/>
    <property type="chains" value="F=1-155"/>
</dbReference>
<dbReference type="PDB" id="5W64">
    <property type="method" value="EM"/>
    <property type="resolution" value="4.20 A"/>
    <property type="chains" value="F=1-155"/>
</dbReference>
<dbReference type="PDB" id="5W65">
    <property type="method" value="EM"/>
    <property type="resolution" value="4.30 A"/>
    <property type="chains" value="F=1-155"/>
</dbReference>
<dbReference type="PDB" id="5W66">
    <property type="method" value="EM"/>
    <property type="resolution" value="3.90 A"/>
    <property type="chains" value="F=1-155"/>
</dbReference>
<dbReference type="PDB" id="6BLO">
    <property type="method" value="X-ray"/>
    <property type="resolution" value="3.40 A"/>
    <property type="chains" value="F=1-155"/>
</dbReference>
<dbReference type="PDB" id="6BLP">
    <property type="method" value="X-ray"/>
    <property type="resolution" value="3.20 A"/>
    <property type="chains" value="F=1-155"/>
</dbReference>
<dbReference type="PDB" id="6BM2">
    <property type="method" value="X-ray"/>
    <property type="resolution" value="3.40 A"/>
    <property type="chains" value="F=1-155"/>
</dbReference>
<dbReference type="PDB" id="6BM4">
    <property type="method" value="X-ray"/>
    <property type="resolution" value="2.95 A"/>
    <property type="chains" value="F=1-155"/>
</dbReference>
<dbReference type="PDB" id="6BQF">
    <property type="method" value="X-ray"/>
    <property type="resolution" value="3.35 A"/>
    <property type="chains" value="F=1-155"/>
</dbReference>
<dbReference type="PDB" id="6CNB">
    <property type="method" value="EM"/>
    <property type="resolution" value="4.10 A"/>
    <property type="chains" value="F=1-155"/>
</dbReference>
<dbReference type="PDB" id="6CNC">
    <property type="method" value="EM"/>
    <property type="resolution" value="4.10 A"/>
    <property type="chains" value="F=1-155"/>
</dbReference>
<dbReference type="PDB" id="6CND">
    <property type="method" value="EM"/>
    <property type="resolution" value="4.80 A"/>
    <property type="chains" value="F=1-155"/>
</dbReference>
<dbReference type="PDB" id="6CNF">
    <property type="method" value="EM"/>
    <property type="resolution" value="4.50 A"/>
    <property type="chains" value="F=1-155"/>
</dbReference>
<dbReference type="PDB" id="6EU0">
    <property type="method" value="EM"/>
    <property type="resolution" value="4.00 A"/>
    <property type="chains" value="F=1-155"/>
</dbReference>
<dbReference type="PDB" id="6EU1">
    <property type="method" value="EM"/>
    <property type="resolution" value="3.40 A"/>
    <property type="chains" value="F=1-155"/>
</dbReference>
<dbReference type="PDB" id="6EU2">
    <property type="method" value="EM"/>
    <property type="resolution" value="3.40 A"/>
    <property type="chains" value="F=1-155"/>
</dbReference>
<dbReference type="PDB" id="6EU3">
    <property type="method" value="EM"/>
    <property type="resolution" value="3.30 A"/>
    <property type="chains" value="F=1-155"/>
</dbReference>
<dbReference type="PDB" id="6F40">
    <property type="method" value="EM"/>
    <property type="resolution" value="3.70 A"/>
    <property type="chains" value="F=1-155"/>
</dbReference>
<dbReference type="PDB" id="6F41">
    <property type="method" value="EM"/>
    <property type="resolution" value="4.30 A"/>
    <property type="chains" value="F=1-155"/>
</dbReference>
<dbReference type="PDB" id="6F42">
    <property type="method" value="EM"/>
    <property type="resolution" value="5.50 A"/>
    <property type="chains" value="F=1-155"/>
</dbReference>
<dbReference type="PDB" id="6F44">
    <property type="method" value="EM"/>
    <property type="resolution" value="4.20 A"/>
    <property type="chains" value="F=1-155"/>
</dbReference>
<dbReference type="PDB" id="6GYK">
    <property type="method" value="EM"/>
    <property type="resolution" value="5.10 A"/>
    <property type="chains" value="F=2-155"/>
</dbReference>
<dbReference type="PDB" id="6GYL">
    <property type="method" value="EM"/>
    <property type="resolution" value="4.80 A"/>
    <property type="chains" value="F=1-155"/>
</dbReference>
<dbReference type="PDB" id="6GYM">
    <property type="method" value="EM"/>
    <property type="resolution" value="6.70 A"/>
    <property type="chains" value="F=1-155"/>
</dbReference>
<dbReference type="PDB" id="6H67">
    <property type="method" value="EM"/>
    <property type="resolution" value="3.60 A"/>
    <property type="chains" value="F=1-155"/>
</dbReference>
<dbReference type="PDB" id="6H68">
    <property type="method" value="EM"/>
    <property type="resolution" value="4.60 A"/>
    <property type="chains" value="F=1-155"/>
</dbReference>
<dbReference type="PDB" id="6HKO">
    <property type="method" value="EM"/>
    <property type="resolution" value="3.42 A"/>
    <property type="chains" value="F=1-155"/>
</dbReference>
<dbReference type="PDB" id="6HLQ">
    <property type="method" value="EM"/>
    <property type="resolution" value="3.18 A"/>
    <property type="chains" value="F=1-155"/>
</dbReference>
<dbReference type="PDB" id="6HLR">
    <property type="method" value="EM"/>
    <property type="resolution" value="3.18 A"/>
    <property type="chains" value="F=1-155"/>
</dbReference>
<dbReference type="PDB" id="6HLS">
    <property type="method" value="EM"/>
    <property type="resolution" value="3.21 A"/>
    <property type="chains" value="F=1-155"/>
</dbReference>
<dbReference type="PDB" id="6I84">
    <property type="method" value="EM"/>
    <property type="resolution" value="4.40 A"/>
    <property type="chains" value="F=1-155"/>
</dbReference>
<dbReference type="PDB" id="6O6C">
    <property type="method" value="EM"/>
    <property type="resolution" value="3.10 A"/>
    <property type="chains" value="E=1-155"/>
</dbReference>
<dbReference type="PDB" id="6RQH">
    <property type="method" value="EM"/>
    <property type="resolution" value="3.70 A"/>
    <property type="chains" value="F=1-155"/>
</dbReference>
<dbReference type="PDB" id="6RQL">
    <property type="method" value="EM"/>
    <property type="resolution" value="2.90 A"/>
    <property type="chains" value="F=1-155"/>
</dbReference>
<dbReference type="PDB" id="6RQT">
    <property type="method" value="EM"/>
    <property type="resolution" value="4.00 A"/>
    <property type="chains" value="F=1-155"/>
</dbReference>
<dbReference type="PDB" id="6RRD">
    <property type="method" value="EM"/>
    <property type="resolution" value="3.10 A"/>
    <property type="chains" value="F=1-155"/>
</dbReference>
<dbReference type="PDB" id="6RUI">
    <property type="method" value="EM"/>
    <property type="resolution" value="2.70 A"/>
    <property type="chains" value="F=1-155"/>
</dbReference>
<dbReference type="PDB" id="6RUO">
    <property type="method" value="EM"/>
    <property type="resolution" value="3.50 A"/>
    <property type="chains" value="F=1-155"/>
</dbReference>
<dbReference type="PDB" id="6RWE">
    <property type="method" value="EM"/>
    <property type="resolution" value="3.00 A"/>
    <property type="chains" value="F=1-155"/>
</dbReference>
<dbReference type="PDB" id="6TPS">
    <property type="method" value="EM"/>
    <property type="resolution" value="3.54 A"/>
    <property type="chains" value="F=1-155"/>
</dbReference>
<dbReference type="PDB" id="6TUT">
    <property type="method" value="EM"/>
    <property type="resolution" value="3.25 A"/>
    <property type="chains" value="F=1-155"/>
</dbReference>
<dbReference type="PDB" id="6UPX">
    <property type="method" value="X-ray"/>
    <property type="resolution" value="3.40 A"/>
    <property type="chains" value="F=1-155"/>
</dbReference>
<dbReference type="PDB" id="6UPY">
    <property type="method" value="X-ray"/>
    <property type="resolution" value="3.40 A"/>
    <property type="chains" value="F=1-155"/>
</dbReference>
<dbReference type="PDB" id="6UPZ">
    <property type="method" value="X-ray"/>
    <property type="resolution" value="3.10 A"/>
    <property type="chains" value="F=1-155"/>
</dbReference>
<dbReference type="PDB" id="6UQ0">
    <property type="method" value="X-ray"/>
    <property type="resolution" value="3.56 A"/>
    <property type="chains" value="F=1-155"/>
</dbReference>
<dbReference type="PDB" id="6UQ1">
    <property type="method" value="X-ray"/>
    <property type="resolution" value="3.60 A"/>
    <property type="chains" value="F=1-155"/>
</dbReference>
<dbReference type="PDB" id="6UQ2">
    <property type="method" value="X-ray"/>
    <property type="resolution" value="3.20 A"/>
    <property type="chains" value="F=1-155"/>
</dbReference>
<dbReference type="PDB" id="6UQ3">
    <property type="method" value="X-ray"/>
    <property type="resolution" value="3.47 A"/>
    <property type="chains" value="F=1-155"/>
</dbReference>
<dbReference type="PDB" id="7KED">
    <property type="method" value="X-ray"/>
    <property type="resolution" value="3.60 A"/>
    <property type="chains" value="F=1-155"/>
</dbReference>
<dbReference type="PDB" id="7KEE">
    <property type="method" value="X-ray"/>
    <property type="resolution" value="3.45 A"/>
    <property type="chains" value="F=1-155"/>
</dbReference>
<dbReference type="PDB" id="7KEF">
    <property type="method" value="X-ray"/>
    <property type="resolution" value="3.89 A"/>
    <property type="chains" value="F=1-155"/>
</dbReference>
<dbReference type="PDB" id="7MEI">
    <property type="method" value="EM"/>
    <property type="resolution" value="3.54 A"/>
    <property type="chains" value="F/f=1-155"/>
</dbReference>
<dbReference type="PDB" id="7MK9">
    <property type="method" value="EM"/>
    <property type="resolution" value="3.54 A"/>
    <property type="chains" value="F=1-155"/>
</dbReference>
<dbReference type="PDB" id="7MKA">
    <property type="method" value="EM"/>
    <property type="resolution" value="3.54 A"/>
    <property type="chains" value="f=1-155"/>
</dbReference>
<dbReference type="PDB" id="7ML0">
    <property type="method" value="EM"/>
    <property type="resolution" value="3.00 A"/>
    <property type="chains" value="F=1-155"/>
</dbReference>
<dbReference type="PDB" id="7ML1">
    <property type="method" value="EM"/>
    <property type="resolution" value="4.00 A"/>
    <property type="chains" value="F=1-155"/>
</dbReference>
<dbReference type="PDB" id="7ML2">
    <property type="method" value="EM"/>
    <property type="resolution" value="3.40 A"/>
    <property type="chains" value="F=1-155"/>
</dbReference>
<dbReference type="PDB" id="7ML4">
    <property type="method" value="EM"/>
    <property type="resolution" value="3.10 A"/>
    <property type="chains" value="F=1-155"/>
</dbReference>
<dbReference type="PDB" id="7NKX">
    <property type="method" value="EM"/>
    <property type="resolution" value="2.90 A"/>
    <property type="chains" value="F=1-155"/>
</dbReference>
<dbReference type="PDB" id="7NKY">
    <property type="method" value="EM"/>
    <property type="resolution" value="3.20 A"/>
    <property type="chains" value="F=1-155"/>
</dbReference>
<dbReference type="PDB" id="7O4I">
    <property type="method" value="EM"/>
    <property type="resolution" value="3.20 A"/>
    <property type="chains" value="F=1-155"/>
</dbReference>
<dbReference type="PDB" id="7O4J">
    <property type="method" value="EM"/>
    <property type="resolution" value="2.90 A"/>
    <property type="chains" value="F=1-155"/>
</dbReference>
<dbReference type="PDB" id="7O4K">
    <property type="method" value="EM"/>
    <property type="resolution" value="3.60 A"/>
    <property type="chains" value="F=1-155"/>
</dbReference>
<dbReference type="PDB" id="7O4L">
    <property type="method" value="EM"/>
    <property type="resolution" value="3.40 A"/>
    <property type="chains" value="F=1-155"/>
</dbReference>
<dbReference type="PDB" id="7O72">
    <property type="method" value="EM"/>
    <property type="resolution" value="3.40 A"/>
    <property type="chains" value="F=1-155"/>
</dbReference>
<dbReference type="PDB" id="7O73">
    <property type="method" value="EM"/>
    <property type="resolution" value="3.40 A"/>
    <property type="chains" value="F=1-155"/>
</dbReference>
<dbReference type="PDB" id="7O75">
    <property type="method" value="EM"/>
    <property type="resolution" value="3.20 A"/>
    <property type="chains" value="F=1-155"/>
</dbReference>
<dbReference type="PDB" id="7RIM">
    <property type="method" value="X-ray"/>
    <property type="resolution" value="2.90 A"/>
    <property type="chains" value="F=1-155"/>
</dbReference>
<dbReference type="PDB" id="7RIP">
    <property type="method" value="X-ray"/>
    <property type="resolution" value="3.30 A"/>
    <property type="chains" value="F=1-155"/>
</dbReference>
<dbReference type="PDB" id="7RIQ">
    <property type="method" value="X-ray"/>
    <property type="resolution" value="3.00 A"/>
    <property type="chains" value="F=1-155"/>
</dbReference>
<dbReference type="PDB" id="7RIW">
    <property type="method" value="X-ray"/>
    <property type="resolution" value="3.20 A"/>
    <property type="chains" value="F=1-155"/>
</dbReference>
<dbReference type="PDB" id="7RIX">
    <property type="method" value="X-ray"/>
    <property type="resolution" value="3.40 A"/>
    <property type="chains" value="F=1-155"/>
</dbReference>
<dbReference type="PDB" id="7RIY">
    <property type="method" value="X-ray"/>
    <property type="resolution" value="3.70 A"/>
    <property type="chains" value="F=1-155"/>
</dbReference>
<dbReference type="PDB" id="7UI9">
    <property type="method" value="EM"/>
    <property type="resolution" value="3.30 A"/>
    <property type="chains" value="F=1-155"/>
</dbReference>
<dbReference type="PDB" id="7UIF">
    <property type="method" value="EM"/>
    <property type="resolution" value="4.60 A"/>
    <property type="chains" value="F=1-155"/>
</dbReference>
<dbReference type="PDB" id="7UIO">
    <property type="method" value="EM"/>
    <property type="resolution" value="3.30 A"/>
    <property type="chains" value="AF/BF=1-155"/>
</dbReference>
<dbReference type="PDB" id="7Z0H">
    <property type="method" value="EM"/>
    <property type="resolution" value="2.60 A"/>
    <property type="chains" value="F=1-155"/>
</dbReference>
<dbReference type="PDB" id="7Z1L">
    <property type="method" value="EM"/>
    <property type="resolution" value="2.80 A"/>
    <property type="chains" value="F=1-155"/>
</dbReference>
<dbReference type="PDB" id="7Z1M">
    <property type="method" value="EM"/>
    <property type="resolution" value="3.40 A"/>
    <property type="chains" value="F=1-155"/>
</dbReference>
<dbReference type="PDB" id="7Z1N">
    <property type="method" value="EM"/>
    <property type="resolution" value="3.90 A"/>
    <property type="chains" value="F=1-155"/>
</dbReference>
<dbReference type="PDB" id="7Z1O">
    <property type="method" value="EM"/>
    <property type="resolution" value="2.70 A"/>
    <property type="chains" value="F=1-155"/>
</dbReference>
<dbReference type="PDB" id="7Z2Z">
    <property type="method" value="EM"/>
    <property type="resolution" value="3.07 A"/>
    <property type="chains" value="F=1-155"/>
</dbReference>
<dbReference type="PDB" id="7Z30">
    <property type="method" value="EM"/>
    <property type="resolution" value="2.90 A"/>
    <property type="chains" value="F=1-155"/>
</dbReference>
<dbReference type="PDB" id="7Z31">
    <property type="method" value="EM"/>
    <property type="resolution" value="2.76 A"/>
    <property type="chains" value="F=1-155"/>
</dbReference>
<dbReference type="PDB" id="7ZS9">
    <property type="method" value="EM"/>
    <property type="resolution" value="3.10 A"/>
    <property type="chains" value="F=1-155"/>
</dbReference>
<dbReference type="PDB" id="7ZSA">
    <property type="method" value="EM"/>
    <property type="resolution" value="4.00 A"/>
    <property type="chains" value="F=1-155"/>
</dbReference>
<dbReference type="PDB" id="7ZSB">
    <property type="method" value="EM"/>
    <property type="resolution" value="6.60 A"/>
    <property type="chains" value="F=1-155"/>
</dbReference>
<dbReference type="PDB" id="8BWS">
    <property type="method" value="EM"/>
    <property type="resolution" value="3.20 A"/>
    <property type="chains" value="F=1-155"/>
</dbReference>
<dbReference type="PDB" id="8CEN">
    <property type="method" value="EM"/>
    <property type="resolution" value="3.00 A"/>
    <property type="chains" value="F=1-155"/>
</dbReference>
<dbReference type="PDB" id="8CEO">
    <property type="method" value="EM"/>
    <property type="resolution" value="3.60 A"/>
    <property type="chains" value="F=1-155"/>
</dbReference>
<dbReference type="PDB" id="8JCH">
    <property type="method" value="EM"/>
    <property type="resolution" value="2.70 A"/>
    <property type="chains" value="F=1-155"/>
</dbReference>
<dbReference type="PDB" id="8K5P">
    <property type="method" value="EM"/>
    <property type="resolution" value="2.80 A"/>
    <property type="chains" value="F=1-155"/>
</dbReference>
<dbReference type="PDB" id="8RAM">
    <property type="method" value="EM"/>
    <property type="resolution" value="2.80 A"/>
    <property type="chains" value="F=1-155"/>
</dbReference>
<dbReference type="PDB" id="8RAP">
    <property type="method" value="EM"/>
    <property type="resolution" value="4.30 A"/>
    <property type="chains" value="F=1-155"/>
</dbReference>
<dbReference type="PDB" id="8TUG">
    <property type="method" value="EM"/>
    <property type="resolution" value="3.50 A"/>
    <property type="chains" value="F=1-155"/>
</dbReference>
<dbReference type="PDB" id="8TVP">
    <property type="method" value="EM"/>
    <property type="resolution" value="3.70 A"/>
    <property type="chains" value="F=1-155"/>
</dbReference>
<dbReference type="PDB" id="8TVQ">
    <property type="method" value="EM"/>
    <property type="resolution" value="4.60 A"/>
    <property type="chains" value="F=1-155"/>
</dbReference>
<dbReference type="PDB" id="8TVS">
    <property type="method" value="EM"/>
    <property type="resolution" value="4.40 A"/>
    <property type="chains" value="F=1-155"/>
</dbReference>
<dbReference type="PDB" id="8TVV">
    <property type="method" value="EM"/>
    <property type="resolution" value="3.70 A"/>
    <property type="chains" value="F=1-155"/>
</dbReference>
<dbReference type="PDB" id="8TVW">
    <property type="method" value="EM"/>
    <property type="resolution" value="3.60 A"/>
    <property type="chains" value="F=1-155"/>
</dbReference>
<dbReference type="PDB" id="8TVX">
    <property type="method" value="EM"/>
    <property type="resolution" value="3.70 A"/>
    <property type="chains" value="F=1-155"/>
</dbReference>
<dbReference type="PDB" id="8TVY">
    <property type="method" value="EM"/>
    <property type="resolution" value="3.10 A"/>
    <property type="chains" value="F=1-155"/>
</dbReference>
<dbReference type="PDB" id="8U9R">
    <property type="method" value="X-ray"/>
    <property type="resolution" value="3.34 A"/>
    <property type="chains" value="F=1-155"/>
</dbReference>
<dbReference type="PDB" id="8U9X">
    <property type="method" value="X-ray"/>
    <property type="resolution" value="3.05 A"/>
    <property type="chains" value="F=1-155"/>
</dbReference>
<dbReference type="PDB" id="8UKQ">
    <property type="method" value="X-ray"/>
    <property type="resolution" value="3.50 A"/>
    <property type="chains" value="F=1-155"/>
</dbReference>
<dbReference type="PDB" id="8UKR">
    <property type="method" value="X-ray"/>
    <property type="resolution" value="3.78 A"/>
    <property type="chains" value="F=1-155"/>
</dbReference>
<dbReference type="PDB" id="8UKS">
    <property type="method" value="X-ray"/>
    <property type="resolution" value="3.40 A"/>
    <property type="chains" value="F=1-155"/>
</dbReference>
<dbReference type="PDB" id="8UKT">
    <property type="method" value="X-ray"/>
    <property type="resolution" value="3.60 A"/>
    <property type="chains" value="F=1-155"/>
</dbReference>
<dbReference type="PDB" id="8UKU">
    <property type="method" value="X-ray"/>
    <property type="resolution" value="3.60 A"/>
    <property type="chains" value="F=1-155"/>
</dbReference>
<dbReference type="PDB" id="8UMH">
    <property type="method" value="EM"/>
    <property type="resolution" value="4.10 A"/>
    <property type="chains" value="F=1-155"/>
</dbReference>
<dbReference type="PDB" id="8UMI">
    <property type="method" value="EM"/>
    <property type="resolution" value="3.70 A"/>
    <property type="chains" value="F=1-155"/>
</dbReference>
<dbReference type="PDB" id="8UOQ">
    <property type="method" value="EM"/>
    <property type="resolution" value="3.80 A"/>
    <property type="chains" value="F=1-155"/>
</dbReference>
<dbReference type="PDB" id="8UOT">
    <property type="method" value="EM"/>
    <property type="resolution" value="3.70 A"/>
    <property type="chains" value="F=1-155"/>
</dbReference>
<dbReference type="PDB" id="9BVT">
    <property type="method" value="X-ray"/>
    <property type="resolution" value="3.40 A"/>
    <property type="chains" value="F=1-155"/>
</dbReference>
<dbReference type="PDB" id="9BW0">
    <property type="method" value="X-ray"/>
    <property type="resolution" value="3.51 A"/>
    <property type="chains" value="F=1-155"/>
</dbReference>
<dbReference type="PDB" id="9JA1">
    <property type="method" value="EM"/>
    <property type="resolution" value="2.98 A"/>
    <property type="chains" value="F=1-155"/>
</dbReference>
<dbReference type="PDBsum" id="1I3Q"/>
<dbReference type="PDBsum" id="1I50"/>
<dbReference type="PDBsum" id="1I6H"/>
<dbReference type="PDBsum" id="1K83"/>
<dbReference type="PDBsum" id="1NIK"/>
<dbReference type="PDBsum" id="1NT9"/>
<dbReference type="PDBsum" id="1PQV"/>
<dbReference type="PDBsum" id="1R5U"/>
<dbReference type="PDBsum" id="1R9S"/>
<dbReference type="PDBsum" id="1R9T"/>
<dbReference type="PDBsum" id="1SFO"/>
<dbReference type="PDBsum" id="1TWA"/>
<dbReference type="PDBsum" id="1TWC"/>
<dbReference type="PDBsum" id="1TWF"/>
<dbReference type="PDBsum" id="1TWG"/>
<dbReference type="PDBsum" id="1TWH"/>
<dbReference type="PDBsum" id="1WCM"/>
<dbReference type="PDBsum" id="1Y1V"/>
<dbReference type="PDBsum" id="1Y1W"/>
<dbReference type="PDBsum" id="1Y1Y"/>
<dbReference type="PDBsum" id="1Y77"/>
<dbReference type="PDBsum" id="2B63"/>
<dbReference type="PDBsum" id="2B8K"/>
<dbReference type="PDBsum" id="2E2H"/>
<dbReference type="PDBsum" id="2E2I"/>
<dbReference type="PDBsum" id="2E2J"/>
<dbReference type="PDBsum" id="2JA5"/>
<dbReference type="PDBsum" id="2JA6"/>
<dbReference type="PDBsum" id="2JA7"/>
<dbReference type="PDBsum" id="2JA8"/>
<dbReference type="PDBsum" id="2NVQ"/>
<dbReference type="PDBsum" id="2NVT"/>
<dbReference type="PDBsum" id="2NVX"/>
<dbReference type="PDBsum" id="2NVY"/>
<dbReference type="PDBsum" id="2NVZ"/>
<dbReference type="PDBsum" id="2R7Z"/>
<dbReference type="PDBsum" id="2R92"/>
<dbReference type="PDBsum" id="2R93"/>
<dbReference type="PDBsum" id="2VUM"/>
<dbReference type="PDBsum" id="2YU9"/>
<dbReference type="PDBsum" id="3CQZ"/>
<dbReference type="PDBsum" id="3FKI"/>
<dbReference type="PDBsum" id="3GTG"/>
<dbReference type="PDBsum" id="3GTJ"/>
<dbReference type="PDBsum" id="3GTK"/>
<dbReference type="PDBsum" id="3GTL"/>
<dbReference type="PDBsum" id="3GTM"/>
<dbReference type="PDBsum" id="3GTO"/>
<dbReference type="PDBsum" id="3GTP"/>
<dbReference type="PDBsum" id="3GTQ"/>
<dbReference type="PDBsum" id="3H3V"/>
<dbReference type="PDBsum" id="3HOU"/>
<dbReference type="PDBsum" id="3HOV"/>
<dbReference type="PDBsum" id="3HOW"/>
<dbReference type="PDBsum" id="3HOX"/>
<dbReference type="PDBsum" id="3HOY"/>
<dbReference type="PDBsum" id="3HOZ"/>
<dbReference type="PDBsum" id="3I4M"/>
<dbReference type="PDBsum" id="3I4N"/>
<dbReference type="PDBsum" id="3J0K"/>
<dbReference type="PDBsum" id="3J1N"/>
<dbReference type="PDBsum" id="3K1F"/>
<dbReference type="PDBsum" id="3K7A"/>
<dbReference type="PDBsum" id="3M3Y"/>
<dbReference type="PDBsum" id="3M4O"/>
<dbReference type="PDBsum" id="3PO2"/>
<dbReference type="PDBsum" id="3PO3"/>
<dbReference type="PDBsum" id="3QT1"/>
<dbReference type="PDBsum" id="3RZD"/>
<dbReference type="PDBsum" id="3RZO"/>
<dbReference type="PDBsum" id="3S14"/>
<dbReference type="PDBsum" id="3S15"/>
<dbReference type="PDBsum" id="3S16"/>
<dbReference type="PDBsum" id="3S17"/>
<dbReference type="PDBsum" id="3S1M"/>
<dbReference type="PDBsum" id="3S1N"/>
<dbReference type="PDBsum" id="3S1Q"/>
<dbReference type="PDBsum" id="3S1R"/>
<dbReference type="PDBsum" id="3S2D"/>
<dbReference type="PDBsum" id="3S2H"/>
<dbReference type="PDBsum" id="4A3B"/>
<dbReference type="PDBsum" id="4A3C"/>
<dbReference type="PDBsum" id="4A3D"/>
<dbReference type="PDBsum" id="4A3E"/>
<dbReference type="PDBsum" id="4A3F"/>
<dbReference type="PDBsum" id="4A3G"/>
<dbReference type="PDBsum" id="4A3I"/>
<dbReference type="PDBsum" id="4A3J"/>
<dbReference type="PDBsum" id="4A3K"/>
<dbReference type="PDBsum" id="4A3L"/>
<dbReference type="PDBsum" id="4A3M"/>
<dbReference type="PDBsum" id="4A93"/>
<dbReference type="PDBsum" id="4BBR"/>
<dbReference type="PDBsum" id="4BBS"/>
<dbReference type="PDBsum" id="4BXX"/>
<dbReference type="PDBsum" id="4BXZ"/>
<dbReference type="PDBsum" id="4BY1"/>
<dbReference type="PDBsum" id="4BY7"/>
<dbReference type="PDBsum" id="4C2M"/>
<dbReference type="PDBsum" id="4C3H"/>
<dbReference type="PDBsum" id="4C3I"/>
<dbReference type="PDBsum" id="4C3J"/>
<dbReference type="PDBsum" id="4V1M"/>
<dbReference type="PDBsum" id="4V1N"/>
<dbReference type="PDBsum" id="4V1O"/>
<dbReference type="PDBsum" id="4X67"/>
<dbReference type="PDBsum" id="4X6A"/>
<dbReference type="PDBsum" id="4Y52"/>
<dbReference type="PDBsum" id="4Y7N"/>
<dbReference type="PDBsum" id="4YM7"/>
<dbReference type="PDBsum" id="5C3E"/>
<dbReference type="PDBsum" id="5C44"/>
<dbReference type="PDBsum" id="5C4A"/>
<dbReference type="PDBsum" id="5C4J"/>
<dbReference type="PDBsum" id="5C4X"/>
<dbReference type="PDBsum" id="5FJ8"/>
<dbReference type="PDBsum" id="5FJ9"/>
<dbReference type="PDBsum" id="5FJA"/>
<dbReference type="PDBsum" id="5FMF"/>
<dbReference type="PDBsum" id="5FYW"/>
<dbReference type="PDBsum" id="5FZ5"/>
<dbReference type="PDBsum" id="5G5L"/>
<dbReference type="PDBsum" id="5IP7"/>
<dbReference type="PDBsum" id="5IP9"/>
<dbReference type="PDBsum" id="5LMX"/>
<dbReference type="PDBsum" id="5M3F"/>
<dbReference type="PDBsum" id="5M3M"/>
<dbReference type="PDBsum" id="5M5W"/>
<dbReference type="PDBsum" id="5M5X"/>
<dbReference type="PDBsum" id="5M5Y"/>
<dbReference type="PDBsum" id="5M64"/>
<dbReference type="PDBsum" id="5N5Y"/>
<dbReference type="PDBsum" id="5N5Z"/>
<dbReference type="PDBsum" id="5N60"/>
<dbReference type="PDBsum" id="5N61"/>
<dbReference type="PDBsum" id="5OA1"/>
<dbReference type="PDBsum" id="5OQJ"/>
<dbReference type="PDBsum" id="5OQM"/>
<dbReference type="PDBsum" id="5OT2"/>
<dbReference type="PDBsum" id="5SVA"/>
<dbReference type="PDBsum" id="5U5Q"/>
<dbReference type="PDBsum" id="5VVR"/>
<dbReference type="PDBsum" id="5VVS"/>
<dbReference type="PDBsum" id="5W4U"/>
<dbReference type="PDBsum" id="5W51"/>
<dbReference type="PDBsum" id="5W5Y"/>
<dbReference type="PDBsum" id="5W64"/>
<dbReference type="PDBsum" id="5W65"/>
<dbReference type="PDBsum" id="5W66"/>
<dbReference type="PDBsum" id="6BLO"/>
<dbReference type="PDBsum" id="6BLP"/>
<dbReference type="PDBsum" id="6BM2"/>
<dbReference type="PDBsum" id="6BM4"/>
<dbReference type="PDBsum" id="6BQF"/>
<dbReference type="PDBsum" id="6CNB"/>
<dbReference type="PDBsum" id="6CNC"/>
<dbReference type="PDBsum" id="6CND"/>
<dbReference type="PDBsum" id="6CNF"/>
<dbReference type="PDBsum" id="6EU0"/>
<dbReference type="PDBsum" id="6EU1"/>
<dbReference type="PDBsum" id="6EU2"/>
<dbReference type="PDBsum" id="6EU3"/>
<dbReference type="PDBsum" id="6F40"/>
<dbReference type="PDBsum" id="6F41"/>
<dbReference type="PDBsum" id="6F42"/>
<dbReference type="PDBsum" id="6F44"/>
<dbReference type="PDBsum" id="6GYK"/>
<dbReference type="PDBsum" id="6GYL"/>
<dbReference type="PDBsum" id="6GYM"/>
<dbReference type="PDBsum" id="6H67"/>
<dbReference type="PDBsum" id="6H68"/>
<dbReference type="PDBsum" id="6HKO"/>
<dbReference type="PDBsum" id="6HLQ"/>
<dbReference type="PDBsum" id="6HLR"/>
<dbReference type="PDBsum" id="6HLS"/>
<dbReference type="PDBsum" id="6I84"/>
<dbReference type="PDBsum" id="6O6C"/>
<dbReference type="PDBsum" id="6RQH"/>
<dbReference type="PDBsum" id="6RQL"/>
<dbReference type="PDBsum" id="6RQT"/>
<dbReference type="PDBsum" id="6RRD"/>
<dbReference type="PDBsum" id="6RUI"/>
<dbReference type="PDBsum" id="6RUO"/>
<dbReference type="PDBsum" id="6RWE"/>
<dbReference type="PDBsum" id="6TPS"/>
<dbReference type="PDBsum" id="6TUT"/>
<dbReference type="PDBsum" id="6UPX"/>
<dbReference type="PDBsum" id="6UPY"/>
<dbReference type="PDBsum" id="6UPZ"/>
<dbReference type="PDBsum" id="6UQ0"/>
<dbReference type="PDBsum" id="6UQ1"/>
<dbReference type="PDBsum" id="6UQ2"/>
<dbReference type="PDBsum" id="6UQ3"/>
<dbReference type="PDBsum" id="7KED"/>
<dbReference type="PDBsum" id="7KEE"/>
<dbReference type="PDBsum" id="7KEF"/>
<dbReference type="PDBsum" id="7MEI"/>
<dbReference type="PDBsum" id="7MK9"/>
<dbReference type="PDBsum" id="7MKA"/>
<dbReference type="PDBsum" id="7ML0"/>
<dbReference type="PDBsum" id="7ML1"/>
<dbReference type="PDBsum" id="7ML2"/>
<dbReference type="PDBsum" id="7ML4"/>
<dbReference type="PDBsum" id="7NKX"/>
<dbReference type="PDBsum" id="7NKY"/>
<dbReference type="PDBsum" id="7O4I"/>
<dbReference type="PDBsum" id="7O4J"/>
<dbReference type="PDBsum" id="7O4K"/>
<dbReference type="PDBsum" id="7O4L"/>
<dbReference type="PDBsum" id="7O72"/>
<dbReference type="PDBsum" id="7O73"/>
<dbReference type="PDBsum" id="7O75"/>
<dbReference type="PDBsum" id="7RIM"/>
<dbReference type="PDBsum" id="7RIP"/>
<dbReference type="PDBsum" id="7RIQ"/>
<dbReference type="PDBsum" id="7RIW"/>
<dbReference type="PDBsum" id="7RIX"/>
<dbReference type="PDBsum" id="7RIY"/>
<dbReference type="PDBsum" id="7UI9"/>
<dbReference type="PDBsum" id="7UIF"/>
<dbReference type="PDBsum" id="7UIO"/>
<dbReference type="PDBsum" id="7Z0H"/>
<dbReference type="PDBsum" id="7Z1L"/>
<dbReference type="PDBsum" id="7Z1M"/>
<dbReference type="PDBsum" id="7Z1N"/>
<dbReference type="PDBsum" id="7Z1O"/>
<dbReference type="PDBsum" id="7Z2Z"/>
<dbReference type="PDBsum" id="7Z30"/>
<dbReference type="PDBsum" id="7Z31"/>
<dbReference type="PDBsum" id="7ZS9"/>
<dbReference type="PDBsum" id="7ZSA"/>
<dbReference type="PDBsum" id="7ZSB"/>
<dbReference type="PDBsum" id="8BWS"/>
<dbReference type="PDBsum" id="8CEN"/>
<dbReference type="PDBsum" id="8CEO"/>
<dbReference type="PDBsum" id="8JCH"/>
<dbReference type="PDBsum" id="8K5P"/>
<dbReference type="PDBsum" id="8RAM"/>
<dbReference type="PDBsum" id="8RAP"/>
<dbReference type="PDBsum" id="8TUG"/>
<dbReference type="PDBsum" id="8TVP"/>
<dbReference type="PDBsum" id="8TVQ"/>
<dbReference type="PDBsum" id="8TVS"/>
<dbReference type="PDBsum" id="8TVV"/>
<dbReference type="PDBsum" id="8TVW"/>
<dbReference type="PDBsum" id="8TVX"/>
<dbReference type="PDBsum" id="8TVY"/>
<dbReference type="PDBsum" id="8U9R"/>
<dbReference type="PDBsum" id="8U9X"/>
<dbReference type="PDBsum" id="8UKQ"/>
<dbReference type="PDBsum" id="8UKR"/>
<dbReference type="PDBsum" id="8UKS"/>
<dbReference type="PDBsum" id="8UKT"/>
<dbReference type="PDBsum" id="8UKU"/>
<dbReference type="PDBsum" id="8UMH"/>
<dbReference type="PDBsum" id="8UMI"/>
<dbReference type="PDBsum" id="8UOQ"/>
<dbReference type="PDBsum" id="8UOT"/>
<dbReference type="PDBsum" id="9BVT"/>
<dbReference type="PDBsum" id="9BW0"/>
<dbReference type="PDBsum" id="9JA1"/>
<dbReference type="EMDB" id="EMD-0090"/>
<dbReference type="EMDB" id="EMD-0091"/>
<dbReference type="EMDB" id="EMD-0092"/>
<dbReference type="EMDB" id="EMD-0146"/>
<dbReference type="EMDB" id="EMD-0147"/>
<dbReference type="EMDB" id="EMD-0238"/>
<dbReference type="EMDB" id="EMD-0239"/>
<dbReference type="EMDB" id="EMD-0240"/>
<dbReference type="EMDB" id="EMD-0241"/>
<dbReference type="EMDB" id="EMD-0633"/>
<dbReference type="EMDB" id="EMD-10006"/>
<dbReference type="EMDB" id="EMD-10007"/>
<dbReference type="EMDB" id="EMD-10038"/>
<dbReference type="EMDB" id="EMD-10544"/>
<dbReference type="EMDB" id="EMD-10595"/>
<dbReference type="EMDB" id="EMD-12449"/>
<dbReference type="EMDB" id="EMD-12450"/>
<dbReference type="EMDB" id="EMD-12719"/>
<dbReference type="EMDB" id="EMD-12720"/>
<dbReference type="EMDB" id="EMD-12721"/>
<dbReference type="EMDB" id="EMD-12722"/>
<dbReference type="EMDB" id="EMD-12743"/>
<dbReference type="EMDB" id="EMD-12744"/>
<dbReference type="EMDB" id="EMD-12745"/>
<dbReference type="EMDB" id="EMD-14421"/>
<dbReference type="EMDB" id="EMD-14447"/>
<dbReference type="EMDB" id="EMD-14448"/>
<dbReference type="EMDB" id="EMD-14449"/>
<dbReference type="EMDB" id="EMD-14451"/>
<dbReference type="EMDB" id="EMD-14468"/>
<dbReference type="EMDB" id="EMD-14469"/>
<dbReference type="EMDB" id="EMD-14470"/>
<dbReference type="EMDB" id="EMD-14927"/>
<dbReference type="EMDB" id="EMD-14928"/>
<dbReference type="EMDB" id="EMD-14929"/>
<dbReference type="EMDB" id="EMD-16299"/>
<dbReference type="EMDB" id="EMD-16610"/>
<dbReference type="EMDB" id="EMD-16611"/>
<dbReference type="EMDB" id="EMD-19019"/>
<dbReference type="EMDB" id="EMD-19022"/>
<dbReference type="EMDB" id="EMD-23789"/>
<dbReference type="EMDB" id="EMD-26542"/>
<dbReference type="EMDB" id="EMD-26544"/>
<dbReference type="EMDB" id="EMD-26551"/>
<dbReference type="EMDB" id="EMD-2784"/>
<dbReference type="EMDB" id="EMD-2785"/>
<dbReference type="EMDB" id="EMD-2786"/>
<dbReference type="EMDB" id="EMD-3446"/>
<dbReference type="EMDB" id="EMD-3447"/>
<dbReference type="EMDB" id="EMD-3448"/>
<dbReference type="EMDB" id="EMD-3449"/>
<dbReference type="EMDB" id="EMD-3590"/>
<dbReference type="EMDB" id="EMD-3591"/>
<dbReference type="EMDB" id="EMD-3592"/>
<dbReference type="EMDB" id="EMD-3593"/>
<dbReference type="EMDB" id="EMD-36162"/>
<dbReference type="EMDB" id="EMD-36908"/>
<dbReference type="EMDB" id="EMD-3727"/>
<dbReference type="EMDB" id="EMD-3846"/>
<dbReference type="EMDB" id="EMD-3850"/>
<dbReference type="EMDB" id="EMD-3955"/>
<dbReference type="EMDB" id="EMD-3956"/>
<dbReference type="EMDB" id="EMD-3957"/>
<dbReference type="EMDB" id="EMD-3958"/>
<dbReference type="EMDB" id="EMD-4088"/>
<dbReference type="EMDB" id="EMD-4147"/>
<dbReference type="EMDB" id="EMD-4148"/>
<dbReference type="EMDB" id="EMD-41623"/>
<dbReference type="EMDB" id="EMD-41647"/>
<dbReference type="EMDB" id="EMD-41648"/>
<dbReference type="EMDB" id="EMD-41650"/>
<dbReference type="EMDB" id="EMD-41652"/>
<dbReference type="EMDB" id="EMD-41653"/>
<dbReference type="EMDB" id="EMD-41654"/>
<dbReference type="EMDB" id="EMD-41655"/>
<dbReference type="EMDB" id="EMD-4180"/>
<dbReference type="EMDB" id="EMD-4181"/>
<dbReference type="EMDB" id="EMD-4182"/>
<dbReference type="EMDB" id="EMD-4183"/>
<dbReference type="EMDB" id="EMD-42379"/>
<dbReference type="EMDB" id="EMD-42380"/>
<dbReference type="EMDB" id="EMD-42437"/>
<dbReference type="EMDB" id="EMD-42438"/>
<dbReference type="EMDB" id="EMD-4429"/>
<dbReference type="EMDB" id="EMD-4982"/>
<dbReference type="EMDB" id="EMD-4984"/>
<dbReference type="EMDB" id="EMD-4985"/>
<dbReference type="EMDB" id="EMD-4987"/>
<dbReference type="EMDB" id="EMD-61287"/>
<dbReference type="EMDB" id="EMD-7530"/>
<dbReference type="EMDB" id="EMD-7531"/>
<dbReference type="EMDB" id="EMD-7532"/>
<dbReference type="EMDB" id="EMD-7533"/>
<dbReference type="EMDB" id="EMD-8735"/>
<dbReference type="EMDB" id="EMD-8737"/>
<dbReference type="EMDB" id="EMD-8771"/>
<dbReference type="EMDB" id="EMD-8773"/>
<dbReference type="EMDB" id="EMD-8774"/>
<dbReference type="EMDB" id="EMD-8775"/>
<dbReference type="EMDB" id="EMD-8776"/>
<dbReference type="EMDB" id="EMD-8777"/>
<dbReference type="SMR" id="P20435"/>
<dbReference type="BioGRID" id="36359">
    <property type="interactions" value="128"/>
</dbReference>
<dbReference type="ComplexPortal" id="CPX-1664">
    <property type="entry name" value="DNA-directed RNA Polymerase I complex"/>
</dbReference>
<dbReference type="ComplexPortal" id="CPX-2660">
    <property type="entry name" value="DNA-directed RNA polymerase III complex"/>
</dbReference>
<dbReference type="ComplexPortal" id="CPX-2662">
    <property type="entry name" value="DNA-directed RNA polymerase II complex"/>
</dbReference>
<dbReference type="DIP" id="DIP-2194N"/>
<dbReference type="FunCoup" id="P20435">
    <property type="interactions" value="830"/>
</dbReference>
<dbReference type="IntAct" id="P20435">
    <property type="interactions" value="68"/>
</dbReference>
<dbReference type="MINT" id="P20435"/>
<dbReference type="STRING" id="4932.YPR187W"/>
<dbReference type="iPTMnet" id="P20435"/>
<dbReference type="PaxDb" id="4932-YPR187W"/>
<dbReference type="PeptideAtlas" id="P20435"/>
<dbReference type="EnsemblFungi" id="YPR187W_mRNA">
    <property type="protein sequence ID" value="YPR187W"/>
    <property type="gene ID" value="YPR187W"/>
</dbReference>
<dbReference type="GeneID" id="856317"/>
<dbReference type="KEGG" id="sce:YPR187W"/>
<dbReference type="AGR" id="SGD:S000006391"/>
<dbReference type="SGD" id="S000006391">
    <property type="gene designation" value="RPO26"/>
</dbReference>
<dbReference type="VEuPathDB" id="FungiDB:YPR187W"/>
<dbReference type="eggNOG" id="KOG3405">
    <property type="taxonomic scope" value="Eukaryota"/>
</dbReference>
<dbReference type="GeneTree" id="ENSGT00390000010415"/>
<dbReference type="HOGENOM" id="CLU_112527_0_2_1"/>
<dbReference type="InParanoid" id="P20435"/>
<dbReference type="OMA" id="FEDWGCD"/>
<dbReference type="OrthoDB" id="259769at2759"/>
<dbReference type="BioCyc" id="YEAST:G3O-34310-MONOMER"/>
<dbReference type="Reactome" id="R-SCE-113418">
    <property type="pathway name" value="Formation of the Early Elongation Complex"/>
</dbReference>
<dbReference type="Reactome" id="R-SCE-674695">
    <property type="pathway name" value="RNA Polymerase II Pre-transcription Events"/>
</dbReference>
<dbReference type="Reactome" id="R-SCE-6781823">
    <property type="pathway name" value="Formation of TC-NER Pre-Incision Complex"/>
</dbReference>
<dbReference type="Reactome" id="R-SCE-6782135">
    <property type="pathway name" value="Dual incision in TC-NER"/>
</dbReference>
<dbReference type="Reactome" id="R-SCE-6782210">
    <property type="pathway name" value="Gap-filling DNA repair synthesis and ligation in TC-NER"/>
</dbReference>
<dbReference type="Reactome" id="R-SCE-6796648">
    <property type="pathway name" value="TP53 Regulates Transcription of DNA Repair Genes"/>
</dbReference>
<dbReference type="Reactome" id="R-SCE-6807505">
    <property type="pathway name" value="RNA polymerase II transcribes snRNA genes"/>
</dbReference>
<dbReference type="Reactome" id="R-SCE-72086">
    <property type="pathway name" value="mRNA Capping"/>
</dbReference>
<dbReference type="Reactome" id="R-SCE-72203">
    <property type="pathway name" value="Processing of Capped Intron-Containing Pre-mRNA"/>
</dbReference>
<dbReference type="Reactome" id="R-SCE-73762">
    <property type="pathway name" value="RNA Polymerase I Transcription Initiation"/>
</dbReference>
<dbReference type="Reactome" id="R-SCE-73772">
    <property type="pathway name" value="RNA Polymerase I Promoter Escape"/>
</dbReference>
<dbReference type="Reactome" id="R-SCE-73776">
    <property type="pathway name" value="RNA Polymerase II Promoter Escape"/>
</dbReference>
<dbReference type="Reactome" id="R-SCE-73779">
    <property type="pathway name" value="RNA Polymerase II Transcription Pre-Initiation And Promoter Opening"/>
</dbReference>
<dbReference type="Reactome" id="R-SCE-75953">
    <property type="pathway name" value="RNA Polymerase II Transcription Initiation"/>
</dbReference>
<dbReference type="Reactome" id="R-SCE-76042">
    <property type="pathway name" value="RNA Polymerase II Transcription Initiation And Promoter Clearance"/>
</dbReference>
<dbReference type="Reactome" id="R-SCE-76066">
    <property type="pathway name" value="RNA Polymerase III Transcription Initiation From Type 2 Promoter"/>
</dbReference>
<dbReference type="Reactome" id="R-SCE-77075">
    <property type="pathway name" value="RNA Pol II CTD phosphorylation and interaction with CE"/>
</dbReference>
<dbReference type="Reactome" id="R-SCE-9018519">
    <property type="pathway name" value="Estrogen-dependent gene expression"/>
</dbReference>
<dbReference type="BioGRID-ORCS" id="856317">
    <property type="hits" value="8 hits in 10 CRISPR screens"/>
</dbReference>
<dbReference type="CD-CODE" id="E03F929F">
    <property type="entry name" value="Stress granule"/>
</dbReference>
<dbReference type="EvolutionaryTrace" id="P20435"/>
<dbReference type="PRO" id="PR:P20435"/>
<dbReference type="Proteomes" id="UP000002311">
    <property type="component" value="Chromosome XVI"/>
</dbReference>
<dbReference type="RNAct" id="P20435">
    <property type="molecule type" value="protein"/>
</dbReference>
<dbReference type="GO" id="GO:0005737">
    <property type="term" value="C:cytoplasm"/>
    <property type="evidence" value="ECO:0007669"/>
    <property type="project" value="UniProtKB-SubCell"/>
</dbReference>
<dbReference type="GO" id="GO:0005654">
    <property type="term" value="C:nucleoplasm"/>
    <property type="evidence" value="ECO:0000304"/>
    <property type="project" value="Reactome"/>
</dbReference>
<dbReference type="GO" id="GO:0005634">
    <property type="term" value="C:nucleus"/>
    <property type="evidence" value="ECO:0000314"/>
    <property type="project" value="ComplexPortal"/>
</dbReference>
<dbReference type="GO" id="GO:0005736">
    <property type="term" value="C:RNA polymerase I complex"/>
    <property type="evidence" value="ECO:0000314"/>
    <property type="project" value="UniProtKB"/>
</dbReference>
<dbReference type="GO" id="GO:0005665">
    <property type="term" value="C:RNA polymerase II, core complex"/>
    <property type="evidence" value="ECO:0000314"/>
    <property type="project" value="SGD"/>
</dbReference>
<dbReference type="GO" id="GO:0005666">
    <property type="term" value="C:RNA polymerase III complex"/>
    <property type="evidence" value="ECO:0000314"/>
    <property type="project" value="SGD"/>
</dbReference>
<dbReference type="GO" id="GO:0003677">
    <property type="term" value="F:DNA binding"/>
    <property type="evidence" value="ECO:0007669"/>
    <property type="project" value="InterPro"/>
</dbReference>
<dbReference type="GO" id="GO:0003899">
    <property type="term" value="F:DNA-directed RNA polymerase activity"/>
    <property type="evidence" value="ECO:0000314"/>
    <property type="project" value="UniProtKB"/>
</dbReference>
<dbReference type="GO" id="GO:0042790">
    <property type="term" value="P:nucleolar large rRNA transcription by RNA polymerase I"/>
    <property type="evidence" value="ECO:0000314"/>
    <property type="project" value="ComplexPortal"/>
</dbReference>
<dbReference type="GO" id="GO:0042254">
    <property type="term" value="P:ribosome biogenesis"/>
    <property type="evidence" value="ECO:0007669"/>
    <property type="project" value="UniProtKB-KW"/>
</dbReference>
<dbReference type="GO" id="GO:0001172">
    <property type="term" value="P:RNA-templated transcription"/>
    <property type="evidence" value="ECO:0007669"/>
    <property type="project" value="GOC"/>
</dbReference>
<dbReference type="GO" id="GO:0006363">
    <property type="term" value="P:termination of RNA polymerase I transcription"/>
    <property type="evidence" value="ECO:0000314"/>
    <property type="project" value="ComplexPortal"/>
</dbReference>
<dbReference type="GO" id="GO:0006386">
    <property type="term" value="P:termination of RNA polymerase III transcription"/>
    <property type="evidence" value="ECO:0000314"/>
    <property type="project" value="ComplexPortal"/>
</dbReference>
<dbReference type="GO" id="GO:0006360">
    <property type="term" value="P:transcription by RNA polymerase I"/>
    <property type="evidence" value="ECO:0000314"/>
    <property type="project" value="UniProtKB"/>
</dbReference>
<dbReference type="GO" id="GO:0006366">
    <property type="term" value="P:transcription by RNA polymerase II"/>
    <property type="evidence" value="ECO:0000315"/>
    <property type="project" value="SGD"/>
</dbReference>
<dbReference type="GO" id="GO:0006383">
    <property type="term" value="P:transcription by RNA polymerase III"/>
    <property type="evidence" value="ECO:0000314"/>
    <property type="project" value="ComplexPortal"/>
</dbReference>
<dbReference type="GO" id="GO:0006362">
    <property type="term" value="P:transcription elongation by RNA polymerase I"/>
    <property type="evidence" value="ECO:0000314"/>
    <property type="project" value="ComplexPortal"/>
</dbReference>
<dbReference type="GO" id="GO:0006368">
    <property type="term" value="P:transcription elongation by RNA polymerase II"/>
    <property type="evidence" value="ECO:0000314"/>
    <property type="project" value="ComplexPortal"/>
</dbReference>
<dbReference type="GO" id="GO:0006361">
    <property type="term" value="P:transcription initiation at RNA polymerase I promoter"/>
    <property type="evidence" value="ECO:0000314"/>
    <property type="project" value="ComplexPortal"/>
</dbReference>
<dbReference type="GO" id="GO:0006367">
    <property type="term" value="P:transcription initiation at RNA polymerase II promoter"/>
    <property type="evidence" value="ECO:0000314"/>
    <property type="project" value="ComplexPortal"/>
</dbReference>
<dbReference type="GO" id="GO:0006384">
    <property type="term" value="P:transcription initiation at RNA polymerase III promoter"/>
    <property type="evidence" value="ECO:0000314"/>
    <property type="project" value="ComplexPortal"/>
</dbReference>
<dbReference type="GO" id="GO:0042797">
    <property type="term" value="P:tRNA transcription by RNA polymerase III"/>
    <property type="evidence" value="ECO:0000314"/>
    <property type="project" value="SGD"/>
</dbReference>
<dbReference type="DisProt" id="DP00771"/>
<dbReference type="FunFam" id="3.90.940.10:FF:000004">
    <property type="entry name" value="DNA-directed RNA polymerases I, II, and III subunit RPABC2"/>
    <property type="match status" value="1"/>
</dbReference>
<dbReference type="Gene3D" id="3.90.940.10">
    <property type="match status" value="1"/>
</dbReference>
<dbReference type="HAMAP" id="MF_00192">
    <property type="entry name" value="RNApol_arch_Rpo6"/>
    <property type="match status" value="1"/>
</dbReference>
<dbReference type="InterPro" id="IPR020708">
    <property type="entry name" value="DNA-dir_RNA_polK_14-18kDa_CS"/>
</dbReference>
<dbReference type="InterPro" id="IPR006110">
    <property type="entry name" value="Pol_omega/Rpo6/RPB6"/>
</dbReference>
<dbReference type="InterPro" id="IPR028363">
    <property type="entry name" value="RPB6"/>
</dbReference>
<dbReference type="InterPro" id="IPR036161">
    <property type="entry name" value="RPB6/omega-like_sf"/>
</dbReference>
<dbReference type="InterPro" id="IPR006111">
    <property type="entry name" value="Rpo6/Rpb6"/>
</dbReference>
<dbReference type="NCBIfam" id="NF002208">
    <property type="entry name" value="PRK01099.1-3"/>
    <property type="match status" value="1"/>
</dbReference>
<dbReference type="PANTHER" id="PTHR47227">
    <property type="entry name" value="DNA-DIRECTED RNA POLYMERASE SUBUNIT K"/>
    <property type="match status" value="1"/>
</dbReference>
<dbReference type="PANTHER" id="PTHR47227:SF5">
    <property type="entry name" value="DNA-DIRECTED RNA POLYMERASES I, II, AND III SUBUNIT RPABC2"/>
    <property type="match status" value="1"/>
</dbReference>
<dbReference type="Pfam" id="PF01192">
    <property type="entry name" value="RNA_pol_Rpb6"/>
    <property type="match status" value="1"/>
</dbReference>
<dbReference type="PIRSF" id="PIRSF500154">
    <property type="entry name" value="RPB6"/>
    <property type="match status" value="1"/>
</dbReference>
<dbReference type="PIRSF" id="PIRSF000778">
    <property type="entry name" value="RpoK/RPB6"/>
    <property type="match status" value="1"/>
</dbReference>
<dbReference type="SMART" id="SM01409">
    <property type="entry name" value="RNA_pol_Rpb6"/>
    <property type="match status" value="1"/>
</dbReference>
<dbReference type="SUPFAM" id="SSF63562">
    <property type="entry name" value="RPB6/omega subunit-like"/>
    <property type="match status" value="1"/>
</dbReference>
<dbReference type="PROSITE" id="PS01111">
    <property type="entry name" value="RNA_POL_K_14KD"/>
    <property type="match status" value="1"/>
</dbReference>
<organism>
    <name type="scientific">Saccharomyces cerevisiae (strain ATCC 204508 / S288c)</name>
    <name type="common">Baker's yeast</name>
    <dbReference type="NCBI Taxonomy" id="559292"/>
    <lineage>
        <taxon>Eukaryota</taxon>
        <taxon>Fungi</taxon>
        <taxon>Dikarya</taxon>
        <taxon>Ascomycota</taxon>
        <taxon>Saccharomycotina</taxon>
        <taxon>Saccharomycetes</taxon>
        <taxon>Saccharomycetales</taxon>
        <taxon>Saccharomycetaceae</taxon>
        <taxon>Saccharomyces</taxon>
    </lineage>
</organism>
<protein>
    <recommendedName>
        <fullName>DNA-directed RNA polymerases I, II, and III subunit RPABC2</fullName>
        <shortName>RNA polymerases I, II, and III subunit ABC2</shortName>
    </recommendedName>
    <alternativeName>
        <fullName>ABC23</fullName>
    </alternativeName>
    <alternativeName>
        <fullName>DNA-directed RNA polymerases I, II, and III 23 kDa polypeptide</fullName>
    </alternativeName>
</protein>
<sequence>MSDYEEAFNDGNENFEDFDVEHFSDEETYEEKPQFKDGETTDANGKTIVTGGNGPEDFQQHEQIRRKTLKEKAIPKDQRATTPYMTKYERARILGTRALQISMNAPVFVDLEGETDPLRIAMKELAEKKIPLVIRRYLPDGSFEDWSVEELIVDL</sequence>
<reference key="1">
    <citation type="journal article" date="1990" name="Genes Dev.">
        <title>Subunits shared by eukaryotic nuclear RNA polymerases.</title>
        <authorList>
            <person name="Woychik N.A."/>
            <person name="Liao S.-M."/>
            <person name="Kolodziej P.A."/>
            <person name="Young R.A."/>
        </authorList>
    </citation>
    <scope>NUCLEOTIDE SEQUENCE [GENOMIC DNA]</scope>
</reference>
<reference key="2">
    <citation type="journal article" date="1990" name="Mol. Cell. Biol.">
        <title>A suppressor of an RNA polymerase II mutation of Saccharomyces cerevisiae encodes a subunit common to RNA polymerases I, II, and III.</title>
        <authorList>
            <person name="Archambault J."/>
            <person name="Schappert K.T."/>
            <person name="Friesen J.D."/>
        </authorList>
    </citation>
    <scope>NUCLEOTIDE SEQUENCE [GENOMIC DNA]</scope>
</reference>
<reference key="3">
    <citation type="journal article" date="1997" name="Nature">
        <title>The nucleotide sequence of Saccharomyces cerevisiae chromosome XVI.</title>
        <authorList>
            <person name="Bussey H."/>
            <person name="Storms R.K."/>
            <person name="Ahmed A."/>
            <person name="Albermann K."/>
            <person name="Allen E."/>
            <person name="Ansorge W."/>
            <person name="Araujo R."/>
            <person name="Aparicio A."/>
            <person name="Barrell B.G."/>
            <person name="Badcock K."/>
            <person name="Benes V."/>
            <person name="Botstein D."/>
            <person name="Bowman S."/>
            <person name="Brueckner M."/>
            <person name="Carpenter J."/>
            <person name="Cherry J.M."/>
            <person name="Chung E."/>
            <person name="Churcher C.M."/>
            <person name="Coster F."/>
            <person name="Davis K."/>
            <person name="Davis R.W."/>
            <person name="Dietrich F.S."/>
            <person name="Delius H."/>
            <person name="DiPaolo T."/>
            <person name="Dubois E."/>
            <person name="Duesterhoeft A."/>
            <person name="Duncan M."/>
            <person name="Floeth M."/>
            <person name="Fortin N."/>
            <person name="Friesen J.D."/>
            <person name="Fritz C."/>
            <person name="Goffeau A."/>
            <person name="Hall J."/>
            <person name="Hebling U."/>
            <person name="Heumann K."/>
            <person name="Hilbert H."/>
            <person name="Hillier L.W."/>
            <person name="Hunicke-Smith S."/>
            <person name="Hyman R.W."/>
            <person name="Johnston M."/>
            <person name="Kalman S."/>
            <person name="Kleine K."/>
            <person name="Komp C."/>
            <person name="Kurdi O."/>
            <person name="Lashkari D."/>
            <person name="Lew H."/>
            <person name="Lin A."/>
            <person name="Lin D."/>
            <person name="Louis E.J."/>
            <person name="Marathe R."/>
            <person name="Messenguy F."/>
            <person name="Mewes H.-W."/>
            <person name="Mirtipati S."/>
            <person name="Moestl D."/>
            <person name="Mueller-Auer S."/>
            <person name="Namath A."/>
            <person name="Nentwich U."/>
            <person name="Oefner P."/>
            <person name="Pearson D."/>
            <person name="Petel F.X."/>
            <person name="Pohl T.M."/>
            <person name="Purnelle B."/>
            <person name="Rajandream M.A."/>
            <person name="Rechmann S."/>
            <person name="Rieger M."/>
            <person name="Riles L."/>
            <person name="Roberts D."/>
            <person name="Schaefer M."/>
            <person name="Scharfe M."/>
            <person name="Scherens B."/>
            <person name="Schramm S."/>
            <person name="Schroeder M."/>
            <person name="Sdicu A.-M."/>
            <person name="Tettelin H."/>
            <person name="Urrestarazu L.A."/>
            <person name="Ushinsky S."/>
            <person name="Vierendeels F."/>
            <person name="Vissers S."/>
            <person name="Voss H."/>
            <person name="Walsh S.V."/>
            <person name="Wambutt R."/>
            <person name="Wang Y."/>
            <person name="Wedler E."/>
            <person name="Wedler H."/>
            <person name="Winnett E."/>
            <person name="Zhong W.-W."/>
            <person name="Zollner A."/>
            <person name="Vo D.H."/>
            <person name="Hani J."/>
        </authorList>
    </citation>
    <scope>NUCLEOTIDE SEQUENCE [LARGE SCALE GENOMIC DNA]</scope>
    <source>
        <strain>ATCC 204508 / S288c</strain>
    </source>
</reference>
<reference key="4">
    <citation type="journal article" date="2014" name="G3 (Bethesda)">
        <title>The reference genome sequence of Saccharomyces cerevisiae: Then and now.</title>
        <authorList>
            <person name="Engel S.R."/>
            <person name="Dietrich F.S."/>
            <person name="Fisk D.G."/>
            <person name="Binkley G."/>
            <person name="Balakrishnan R."/>
            <person name="Costanzo M.C."/>
            <person name="Dwight S.S."/>
            <person name="Hitz B.C."/>
            <person name="Karra K."/>
            <person name="Nash R.S."/>
            <person name="Weng S."/>
            <person name="Wong E.D."/>
            <person name="Lloyd P."/>
            <person name="Skrzypek M.S."/>
            <person name="Miyasato S.R."/>
            <person name="Simison M."/>
            <person name="Cherry J.M."/>
        </authorList>
    </citation>
    <scope>GENOME REANNOTATION</scope>
    <source>
        <strain>ATCC 204508 / S288c</strain>
    </source>
</reference>
<reference key="5">
    <citation type="journal article" date="2001" name="Proc. Natl. Acad. Sci. U.S.A.">
        <title>Differential roles of phosphorylation in the formation of transcriptional active RNA polymerase I.</title>
        <authorList>
            <person name="Fath S."/>
            <person name="Milkereit P."/>
            <person name="Peyroche G."/>
            <person name="Riva M."/>
            <person name="Carles C."/>
            <person name="Tschochner H."/>
        </authorList>
    </citation>
    <scope>IDENTIFICATION IN THE RNA POL I COMPLEX</scope>
</reference>
<reference key="6">
    <citation type="journal article" date="2002" name="Mol. Microbiol.">
        <title>Rpa12p, a conserved RNA polymerase I subunit with two functional domains.</title>
        <authorList>
            <person name="Van Mullem V."/>
            <person name="Landrieux E."/>
            <person name="Vandenhaute J."/>
            <person name="Thuriaux P."/>
        </authorList>
    </citation>
    <scope>IDENTIFICATION IN THE RNA POL I COMPLEX</scope>
</reference>
<reference key="7">
    <citation type="journal article" date="2002" name="Proc. Natl. Acad. Sci. U.S.A.">
        <title>The A14-A43 heterodimer subunit in yeast RNA pol I and their relationship to Rpb4-Rpb7 pol II subunits.</title>
        <authorList>
            <person name="Peyroche G."/>
            <person name="Levillain E."/>
            <person name="Siaut M."/>
            <person name="Callebaut I."/>
            <person name="Schultz P."/>
            <person name="Sentenac A."/>
            <person name="Riva M."/>
            <person name="Carles C."/>
        </authorList>
    </citation>
    <scope>IDENTIFICATION IN THE RNA POL I COMPLEX</scope>
    <scope>INTERACTION WITH RPA43</scope>
</reference>
<reference key="8">
    <citation type="journal article" date="2003" name="Nature">
        <title>Global analysis of protein localization in budding yeast.</title>
        <authorList>
            <person name="Huh W.-K."/>
            <person name="Falvo J.V."/>
            <person name="Gerke L.C."/>
            <person name="Carroll A.S."/>
            <person name="Howson R.W."/>
            <person name="Weissman J.S."/>
            <person name="O'Shea E.K."/>
        </authorList>
    </citation>
    <scope>SUBCELLULAR LOCATION [LARGE SCALE ANALYSIS]</scope>
</reference>
<reference key="9">
    <citation type="journal article" date="2003" name="Nature">
        <title>Global analysis of protein expression in yeast.</title>
        <authorList>
            <person name="Ghaemmaghami S."/>
            <person name="Huh W.-K."/>
            <person name="Bower K."/>
            <person name="Howson R.W."/>
            <person name="Belle A."/>
            <person name="Dephoure N."/>
            <person name="O'Shea E.K."/>
            <person name="Weissman J.S."/>
        </authorList>
    </citation>
    <scope>LEVEL OF PROTEIN EXPRESSION [LARGE SCALE ANALYSIS]</scope>
</reference>
<reference key="10">
    <citation type="journal article" date="1998" name="Cold Spring Harb. Symp. Quant. Biol.">
        <title>The yeast RNA polymerase III transcription machinery: a paradigm for eukaryotic gene activation.</title>
        <authorList>
            <person name="Chedin S."/>
            <person name="Ferri M.L."/>
            <person name="Peyroche G."/>
            <person name="Andrau J.-C."/>
            <person name="Jourdain S."/>
            <person name="Lefebvre O."/>
            <person name="Werner M."/>
            <person name="Carles C."/>
            <person name="Sentenac A."/>
        </authorList>
    </citation>
    <scope>REVIEW ON THE RNA POL III COMPLEX</scope>
    <scope>PHOSPHORYLATION</scope>
</reference>
<reference key="11">
    <citation type="journal article" date="2008" name="Mol. Cell. Proteomics">
        <title>A multidimensional chromatography technology for in-depth phosphoproteome analysis.</title>
        <authorList>
            <person name="Albuquerque C.P."/>
            <person name="Smolka M.B."/>
            <person name="Payne S.H."/>
            <person name="Bafna V."/>
            <person name="Eng J."/>
            <person name="Zhou H."/>
        </authorList>
    </citation>
    <scope>PHOSPHORYLATION [LARGE SCALE ANALYSIS] AT SER-24</scope>
    <scope>IDENTIFICATION BY MASS SPECTROMETRY [LARGE SCALE ANALYSIS]</scope>
</reference>
<reference key="12">
    <citation type="journal article" date="2003" name="Mol. Cell">
        <title>RNA polymerase II/TFIIF structure and conserved organization of the initiation complex.</title>
        <authorList>
            <person name="Chung W.H."/>
            <person name="Craighead J.L."/>
            <person name="Chang W.H."/>
            <person name="Ezeokonkwo C."/>
            <person name="Bareket-Samish A."/>
            <person name="Kornberg R.D."/>
            <person name="Asturias F.J."/>
        </authorList>
    </citation>
    <scope>ELECTRON MICROSCOPY OF THE RNA POL II/TFIIF COMPLEX</scope>
</reference>
<reference key="13">
    <citation type="journal article" date="2001" name="Science">
        <title>Structural basis of transcription: RNA polymerase II at 2.8 A resolution.</title>
        <authorList>
            <person name="Cramer P."/>
            <person name="Bushnell D.A."/>
            <person name="Kornberg R.D."/>
        </authorList>
    </citation>
    <scope>X-RAY CRYSTALLOGRAPHY (2.8 ANGSTROMS) OF THE RNA POL II CORE COMPLEX</scope>
</reference>
<reference key="14">
    <citation type="journal article" date="2001" name="Science">
        <title>Structural basis of transcription: an RNA polymerase II elongation complex at 3.3 A resolution.</title>
        <authorList>
            <person name="Gnatt A.L."/>
            <person name="Cramer P."/>
            <person name="Fu J."/>
            <person name="Bushnell D.A."/>
            <person name="Kornberg R.D."/>
        </authorList>
    </citation>
    <scope>X-RAY CRYSTALLOGRAPHY (3.3 ANGSTROMS) OF THE RNA POL II CORE COMPLEX</scope>
</reference>
<reference key="15">
    <citation type="journal article" date="2002" name="Proc. Natl. Acad. Sci. U.S.A.">
        <title>Structural basis of transcription: alpha-amanitin-RNA polymerase II cocrystal at 2.8 A resolution.</title>
        <authorList>
            <person name="Bushnell D.A."/>
            <person name="Cramer P."/>
            <person name="Kornberg R.D."/>
        </authorList>
    </citation>
    <scope>X-RAY CRYSTALLOGRAPHY (2.8 ANGSTROMS) OF THE RNA POL II CORE COMPLEX IN COMPLEX WITH ALPHA-AMANITIN</scope>
</reference>
<reference key="16">
    <citation type="journal article" date="2003" name="Cell">
        <title>Architecture of the RNA polymerase II-TFIIS complex and implications for mRNA cleavage.</title>
        <authorList>
            <person name="Kettenberger H."/>
            <person name="Armache K.J."/>
            <person name="Cramer P."/>
        </authorList>
    </citation>
    <scope>X-RAY CRYSTALLOGRAPHY (3.8 ANGSTROMS) OF THE RNA POL II COMPLEX IN COMPLEX WITH DST1</scope>
</reference>
<reference key="17">
    <citation type="journal article" date="2003" name="Proc. Natl. Acad. Sci. U.S.A.">
        <title>Architecture of initiation-competent 12-subunit RNA polymerase II.</title>
        <authorList>
            <person name="Armache K.J."/>
            <person name="Kettenberger H."/>
            <person name="Cramer P."/>
        </authorList>
    </citation>
    <scope>X-RAY CRYSTALLOGRAPHY (4.2 ANGSTROMS) OF THE RNA POL II COMPLEX</scope>
</reference>
<reference key="18">
    <citation type="journal article" date="2003" name="Proc. Natl. Acad. Sci. U.S.A.">
        <title>Complete, 12-subunit RNA polymerase II at 4.1-A resolution: implications for the initiation of transcription.</title>
        <authorList>
            <person name="Bushnell D.A."/>
            <person name="Kornberg R.D."/>
        </authorList>
    </citation>
    <scope>X-RAY CRYSTALLOGRAPHY (4.1 ANGSTROMS) OF THE RNA POL II CORE COMPLEX</scope>
</reference>
<reference key="19">
    <citation type="journal article" date="2004" name="Cell">
        <title>Structural basis of transcription: nucleotide selection by rotation in the RNA polymerase II active center.</title>
        <authorList>
            <person name="Westover K.D."/>
            <person name="Bushnell D.A."/>
            <person name="Kornberg R.D."/>
        </authorList>
    </citation>
    <scope>X-RAY CRYSTALLOGRAPHY (2.3 ANGSTROMS) OF THE RNA POL II CORE COMPLEX</scope>
</reference>
<reference key="20">
    <citation type="journal article" date="2004" name="Mol. Cell">
        <title>Complete RNA polymerase II elongation complex structure and its interactions with NTP and TFIIS.</title>
        <authorList>
            <person name="Kettenberger H."/>
            <person name="Armache K.J."/>
            <person name="Cramer P."/>
        </authorList>
    </citation>
    <scope>X-RAY CRYSTALLOGRAPHY (4.5 ANGSTROMS)</scope>
</reference>
<reference key="21">
    <citation type="journal article" date="2004" name="Science">
        <title>Structural basis of transcription: an RNA polymerase II-TFIIB cocrystal at 4.5 Angstroms.</title>
        <authorList>
            <person name="Bushnell D.A."/>
            <person name="Westover K.D."/>
            <person name="Davis R.E."/>
            <person name="Kornberg R.D."/>
        </authorList>
    </citation>
    <scope>X-RAY CRYSTALLOGRAPHY (4.5 ANGSTROMS) OF THE RNA POL II CORE COMPLEX</scope>
</reference>
<reference key="22">
    <citation type="journal article" date="2005" name="J. Biol. Chem.">
        <title>Structures of complete RNA polymerase II and its subcomplex, Rpb4/7.</title>
        <authorList>
            <person name="Armache K.J."/>
            <person name="Mitterweger S."/>
            <person name="Meinhart A."/>
            <person name="Cramer P."/>
        </authorList>
    </citation>
    <scope>X-RAY CRYSTALLOGRAPHY (3.8 ANGSTROMS) OF THE RNA POL II COMPLEX</scope>
</reference>
<reference key="23">
    <citation type="journal article" date="2006" name="Mol. Cell">
        <title>Structural biology of RNA polymerase III: subcomplex C17/25 X-ray structure and 11 subunit enzyme model.</title>
        <authorList>
            <person name="Jasiak A.J."/>
            <person name="Armache K.J."/>
            <person name="Martens B."/>
            <person name="Jansen R.P."/>
            <person name="Cramer P."/>
        </authorList>
    </citation>
    <scope>3D-STRUCTURE MODELING OF THE POL III CORE COMPLEX</scope>
</reference>
<reference key="24">
    <citation type="journal article" date="2006" name="Nat. Struct. Mol. Biol.">
        <title>Structure of an RNA polymerase II-RNA inhibitor complex elucidates transcription regulation by noncoding RNAs.</title>
        <authorList>
            <person name="Kettenberger H."/>
            <person name="Eisenfuhr A."/>
            <person name="Brueckner F."/>
            <person name="Theis M."/>
            <person name="Famulok M."/>
            <person name="Cramer P."/>
        </authorList>
    </citation>
    <scope>X-RAY CRYSTALLOGRAPHY (3.8 ANGSTROMS) OF THE RNA POL II COMPLEX IN COMPLEX WITH INHIBITING NON-CODING RNA</scope>
</reference>
<reference key="25">
    <citation type="journal article" date="2006" name="Structure">
        <title>Phasing RNA polymerase II using intrinsically bound Zn atoms: an updated structural model.</title>
        <authorList>
            <person name="Meyer P.A."/>
            <person name="Ye P."/>
            <person name="Zhang M."/>
            <person name="Suh M.H."/>
            <person name="Fu J."/>
        </authorList>
    </citation>
    <scope>X-RAY CRYSTALLOGRAPHY (4.15 ANGSTROMS) OF THE RNA POL II COMPLEX</scope>
</reference>
<reference key="26">
    <citation type="journal article" date="2007" name="Cell">
        <title>Functional architecture of RNA polymerase I.</title>
        <authorList>
            <person name="Kuhn C.D."/>
            <person name="Geiger S.R."/>
            <person name="Baumli S."/>
            <person name="Gartmann M."/>
            <person name="Gerber J."/>
            <person name="Jennebach S."/>
            <person name="Mielke T."/>
            <person name="Tschochner H."/>
            <person name="Beckmann R."/>
            <person name="Cramer P."/>
        </authorList>
    </citation>
    <scope>STRUCTURE BY ELECTRON MICROSCOPY (12.00 ANGSTROMS) OF THE POL I COMPLEX</scope>
    <scope>FUNCTION</scope>
    <scope>SUBUNIT</scope>
</reference>
<reference key="27">
    <citation type="journal article" date="2013" name="Nature">
        <title>Crystal structure of the 14-subunit RNA polymerase I.</title>
        <authorList>
            <person name="Fernandez-Tornero C."/>
            <person name="Moreno-Morcillo M."/>
            <person name="Rashid U.J."/>
            <person name="Taylor N.M."/>
            <person name="Ruiz F.M."/>
            <person name="Gruene T."/>
            <person name="Legrand P."/>
            <person name="Steuerwald U."/>
            <person name="Muller C.W."/>
        </authorList>
    </citation>
    <scope>X-RAY CRYSTALLOGRAPHY (3.0 ANGSTROMS) OF THE POL I COMPLEX</scope>
    <scope>FUNCTION</scope>
    <scope>SUBUNIT</scope>
</reference>
<reference key="28">
    <citation type="journal article" date="2013" name="Nature">
        <title>RNA polymerase I structure and transcription regulation.</title>
        <authorList>
            <person name="Engel C."/>
            <person name="Sainsbury S."/>
            <person name="Cheung A.C."/>
            <person name="Kostrewa D."/>
            <person name="Cramer P."/>
        </authorList>
    </citation>
    <scope>X-RAY CRYSTALLOGRAPHY (2.8 ANGSTROMS) OF THE POL I COMPLEX</scope>
    <scope>FUNCTION</scope>
    <scope>SUBUNIT</scope>
</reference>
<proteinExistence type="evidence at protein level"/>
<gene>
    <name type="primary">RPO26</name>
    <name type="synonym">RPB6</name>
    <name type="ordered locus">YPR187W</name>
    <name type="ORF">P9677.8</name>
</gene>
<evidence type="ECO:0000256" key="1">
    <source>
        <dbReference type="SAM" id="MobiDB-lite"/>
    </source>
</evidence>
<evidence type="ECO:0000269" key="2">
    <source>
    </source>
</evidence>
<evidence type="ECO:0000269" key="3">
    <source>
    </source>
</evidence>
<evidence type="ECO:0000269" key="4">
    <source>
    </source>
</evidence>
<evidence type="ECO:0000269" key="5">
    <source>
    </source>
</evidence>
<evidence type="ECO:0000269" key="6">
    <source>
    </source>
</evidence>
<evidence type="ECO:0000269" key="7">
    <source>
    </source>
</evidence>
<evidence type="ECO:0000269" key="8">
    <source>
    </source>
</evidence>
<evidence type="ECO:0000269" key="9">
    <source>
    </source>
</evidence>
<evidence type="ECO:0000269" key="10">
    <source>
    </source>
</evidence>
<evidence type="ECO:0000269" key="11">
    <source>
    </source>
</evidence>
<evidence type="ECO:0000269" key="12">
    <source>
    </source>
</evidence>
<evidence type="ECO:0000305" key="13"/>
<evidence type="ECO:0007744" key="14">
    <source>
    </source>
</evidence>
<evidence type="ECO:0007829" key="15">
    <source>
        <dbReference type="PDB" id="1TWF"/>
    </source>
</evidence>
<evidence type="ECO:0007829" key="16">
    <source>
        <dbReference type="PDB" id="6RQL"/>
    </source>
</evidence>
<evidence type="ECO:0007829" key="17">
    <source>
        <dbReference type="PDB" id="6RUI"/>
    </source>
</evidence>
<evidence type="ECO:0007829" key="18">
    <source>
        <dbReference type="PDB" id="7ZS9"/>
    </source>
</evidence>
<evidence type="ECO:0007829" key="19">
    <source>
        <dbReference type="PDB" id="8JCH"/>
    </source>
</evidence>
<feature type="chain" id="PRO_0000133797" description="DNA-directed RNA polymerases I, II, and III subunit RPABC2">
    <location>
        <begin position="1"/>
        <end position="155"/>
    </location>
</feature>
<feature type="region of interest" description="Disordered" evidence="1">
    <location>
        <begin position="1"/>
        <end position="57"/>
    </location>
</feature>
<feature type="region of interest" description="Leucine-zipper">
    <location>
        <begin position="111"/>
        <end position="132"/>
    </location>
</feature>
<feature type="compositionally biased region" description="Acidic residues" evidence="1">
    <location>
        <begin position="1"/>
        <end position="19"/>
    </location>
</feature>
<feature type="compositionally biased region" description="Basic and acidic residues" evidence="1">
    <location>
        <begin position="20"/>
        <end position="39"/>
    </location>
</feature>
<feature type="modified residue" description="Phosphoserine" evidence="14">
    <location>
        <position position="24"/>
    </location>
</feature>
<feature type="helix" evidence="18">
    <location>
        <begin position="26"/>
        <end position="31"/>
    </location>
</feature>
<feature type="helix" evidence="17">
    <location>
        <begin position="57"/>
        <end position="71"/>
    </location>
</feature>
<feature type="strand" evidence="15">
    <location>
        <begin position="76"/>
        <end position="78"/>
    </location>
</feature>
<feature type="strand" evidence="16">
    <location>
        <begin position="83"/>
        <end position="85"/>
    </location>
</feature>
<feature type="helix" evidence="15">
    <location>
        <begin position="87"/>
        <end position="102"/>
    </location>
</feature>
<feature type="helix" evidence="15">
    <location>
        <begin position="117"/>
        <end position="126"/>
    </location>
</feature>
<feature type="strand" evidence="15">
    <location>
        <begin position="132"/>
        <end position="137"/>
    </location>
</feature>
<feature type="strand" evidence="19">
    <location>
        <begin position="139"/>
        <end position="141"/>
    </location>
</feature>
<feature type="strand" evidence="15">
    <location>
        <begin position="143"/>
        <end position="147"/>
    </location>
</feature>
<feature type="turn" evidence="15">
    <location>
        <begin position="148"/>
        <end position="150"/>
    </location>
</feature>
<feature type="strand" evidence="16">
    <location>
        <begin position="151"/>
        <end position="153"/>
    </location>
</feature>
<accession>P20435</accession>
<accession>D6W4I7</accession>
<name>RPAB2_YEAST</name>
<keyword id="KW-0002">3D-structure</keyword>
<keyword id="KW-0963">Cytoplasm</keyword>
<keyword id="KW-0240">DNA-directed RNA polymerase</keyword>
<keyword id="KW-0539">Nucleus</keyword>
<keyword id="KW-0597">Phosphoprotein</keyword>
<keyword id="KW-1185">Reference proteome</keyword>
<keyword id="KW-0690">Ribosome biogenesis</keyword>
<keyword id="KW-0804">Transcription</keyword>
<comment type="function">
    <text evidence="10 11 12">DNA-dependent RNA polymerases catalyze the transcription of DNA into RNA using the four ribonucleoside triphosphates as substrates. Common component of RNA polymerases I, II and III which synthesize ribosomal RNA precursors, mRNA precursors and many functional non-coding RNAs, and small RNAs, such as 5S rRNA and tRNAs, respectively. Pol II is the central component of the basal RNA polymerase II transcription machinery. RNA polymerases are composed of mobile elements that move relative to each other. In Pol II, RPB6 is part of the clamp element and together with parts of RPB1 and RPB2 forms a pocket to which the RPB4-RPB7 subcomplex binds.</text>
</comment>
<comment type="subunit">
    <text evidence="2 3 4 5 6 9 10 11 12">Component of the RNA polymerase I (Pol I), RNA polymerase II (Pol II) and RNA polymerase III (Pol III) complexes. Component of the RNA polymerase I (Pol I) complex consisting of 14 subunits: RPA135, RPA190, RPC40, RPA14, RPB5, RPO26, RPA43, RPB8, RPA12, RPB10, RPC19, RPC10, RPA49 and RPA34. The complex is composed of a horseshoe-shaped core containing ten subunits (RPA135, RPA190, RPB5, RPO26, RPB8, RPB10, RPC10, RPA12, RPC19 and RPC40) where RPA135 and RPA190 form the DNA-binding cleft. Outside of the core, RPA14 and RPA43 form the stalk that mediates interactions with transcription initiation factors and newly synthesized RNA. Component of the RNA polymerase II (Pol II) complex consisting of 12 subunits: RPO21, RPB2, RPB3, RPB4, RPB5, RPO26, RPB7, RPB8, RPB9, RPB10 and RPC10. Component of the RNA polymerase III (Pol III) complex consisting of 17 subunits.</text>
</comment>
<comment type="interaction">
    <interactant intactId="EBI-15786">
        <id>P20435</id>
    </interactant>
    <interactant intactId="EBI-15730">
        <id>P10964</id>
        <label>RPA190</label>
    </interactant>
    <organismsDiffer>false</organismsDiffer>
    <experiments>3</experiments>
</comment>
<comment type="interaction">
    <interactant intactId="EBI-15786">
        <id>P20435</id>
    </interactant>
    <interactant intactId="EBI-15767">
        <id>P08518</id>
        <label>RPB2</label>
    </interactant>
    <organismsDiffer>false</organismsDiffer>
    <experiments>3</experiments>
</comment>
<comment type="subcellular location">
    <subcellularLocation>
        <location evidence="7">Cytoplasm</location>
    </subcellularLocation>
    <subcellularLocation>
        <location evidence="7">Nucleus</location>
    </subcellularLocation>
</comment>
<comment type="miscellaneous">
    <text evidence="8">Present with 6090 molecules/cell in log phase SD medium.</text>
</comment>
<comment type="similarity">
    <text evidence="13">Belongs to the archaeal Rpo6/eukaryotic RPB6 RNA polymerase subunit family.</text>
</comment>